<name>PABP1_HUMAN</name>
<comment type="function">
    <text evidence="4 15 19 26 36 45">Binds the poly(A) tail of mRNA, including that of its own transcript, and regulates processes of mRNA metabolism such as pre-mRNA splicing and mRNA stability (PubMed:11051545, PubMed:17212783, PubMed:25480299). Its function in translational initiation regulation can either be enhanced by PAIP1 or repressed by PAIP2 (PubMed:11051545, PubMed:20573744). Can probably bind to cytoplasmic RNA sequences other than poly(A) in vivo. Binds to N6-methyladenosine (m6A)-containing mRNAs and contributes to MYC stability by binding to m6A-containing MYC mRNAs (PubMed:32245947). Involved in translationally coupled mRNA turnover (PubMed:11051545). Implicated with other RNA-binding proteins in the cytoplasmic deadenylation/translational and decay interplay of the FOS mRNA mediated by the major coding-region determinant of instability (mCRD) domain (PubMed:11051545). Involved in regulation of nonsense-mediated decay (NMD) of mRNAs containing premature stop codons; for the recognition of premature termination codons (PTC) and initiation of NMD a competitive interaction between UPF1 and PABPC1 with the ribosome-bound release factors is proposed (PubMed:18447585). By binding to long poly(A) tails, may protect them from uridylation by ZCCHC6/ZCCHC11 and hence contribute to mRNA stability (PubMed:25480299).</text>
</comment>
<comment type="function">
    <text evidence="37">(Microbial infection) Positively regulates the replication of dengue virus (DENV).</text>
</comment>
<comment type="subunit">
    <text evidence="1 4 5 6 7 9 10 12 13 14 15 16 17 18 19 20 22 23 24 25 26 27 28 29 30 32 33 34 35 37 38 39 40 42 43 45 46 48 51">May form homodimers. Component of a multisubunit autoregulatory ribonucleoprotein complex (ARC), at least composed of IGF2BP1, PABPC1 and CSDE1 (PubMed:16356927). Directly interacts with IGF2BP1; the interaction is enhanced by SEPIN14P20 peptide RBPR (PubMed:29476152, PubMed:32245947). Part of a complex associated with the FOS mCRD domain and consisting of HNRPD, SYNCRIP, PAIP1 and CSDE1/UNR (PubMed:11051545). Interacts with the PABPC1-interacting motif-1 (PAM1) and -2 (PAM2) of PAIP1 and PAIP2 (PubMed:11172725, PubMed:11287632, PubMed:11438674, PubMed:11997512, PubMed:20096703, PubMed:33876849, PubMed:9548260). Interacts with PAIP1 with a 1:1 stoichiometry and with PAIP2 with a 1:2 stoichiometry. The interaction with CSDE1 is direct and RNA-independent. Found in a mRNP complex with YBX2 (By similarity). Interacts with TENT2/GLD2 (By similarity). Identified in the spliceosome C complex (PubMed:11991638). Identified in a mRNP complex, at least composed of DHX9, DDX3X, ELAVL1, HNRNPU, IGF2BP1, ILF3, PABPC1, PCBP2, PTBP2, STAU1, STAU2, SYNCRIP and YBX1. The interaction with DDX3X is direct and RNA-independent (PubMed:18596238, PubMed:21883093, PubMed:22872150). This interaction increases in stressed cells and decreases during cell recovery (PubMed:21883093). Identified in a IGF2BP1-dependent mRNP granule complex containing untranslated mRNAs. Interacts with NXF1/TAP (PubMed:17267499, PubMed:18596238). Interacts with PIWIL1 (By similarity). Interacts with AGO1, AGO2, GSPT1 and GSPT2 (PubMed:17932509, PubMed:18447585, Ref.64). Interacts with LARP4B (Ref.66). Interacts (via the second and third RRM domains and the C-terminus) with PAIP2B (via central acidic portion and C-terminus) (PubMed:11287632, PubMed:16804161). Forms a complex with LARP1 and SHFL (PubMed:20430826, PubMed:24532714, PubMed:25940091, PubMed:26735137). Interacts with LARP4 (PubMed:21098120). Interacts with ZFC3H1 in a RNase-sensitive manner (PubMed:27871484). Interacts with TRIM71 (via NHL repeats) in an RNA-dependent manner (PubMed:23125361). Interacts with TENT5C; the interaction has no effect on TENT5C poly(A) polymerase function (PubMed:28931820). Interacts with G3BP1 and G3BP2 (PubMed:23279204). Interacts with ENDOV; the interaction is RNA-dependent and stimulates ENDOV activity (PubMed:27573237). Interacts with UPF1; the interaction is RNA-dependent (PubMed:25220460). Interacts with IGF2BP2 and IGF2BP3 (PubMed:29476152). May interact with SETX (PubMed:21700224). Interacts with RBM46 (By similarity). Interacts with PAN3 isoform 1/Pan3L and isoform 3/Pan3S (via N-terminus); interaction with isoform 1 is less efficient than with isoform 3 (PubMed:28559491).</text>
</comment>
<comment type="subunit">
    <text evidence="24">(Microbial infection) Interacts (via C-terminus) with human cytomegalovirus/HHV-5 protein UL69.</text>
</comment>
<comment type="subunit">
    <text evidence="44">(Microbial infection) Interacts (via C-terminus) with human respiratory syncytial virus (HRSV) M2-1 protein.</text>
</comment>
<comment type="subunit">
    <text evidence="31">(Microbial infection) Interacts with human herpesvirus 8 protein MTA/ORF57.</text>
</comment>
<comment type="interaction">
    <interactant intactId="EBI-81531">
        <id>P11940</id>
    </interactant>
    <interactant intactId="EBI-77613">
        <id>P05067</id>
        <label>APP</label>
    </interactant>
    <organismsDiffer>false</organismsDiffer>
    <experiments>3</experiments>
</comment>
<comment type="interaction">
    <interactant intactId="EBI-81531">
        <id>P11940</id>
    </interactant>
    <interactant intactId="EBI-697691">
        <id>Q99700</id>
        <label>ATXN2</label>
    </interactant>
    <organismsDiffer>false</organismsDiffer>
    <experiments>8</experiments>
</comment>
<comment type="interaction">
    <interactant intactId="EBI-81531">
        <id>P11940</id>
    </interactant>
    <interactant intactId="EBI-25891409">
        <id>Q99700-5</id>
        <label>ATXN2</label>
    </interactant>
    <organismsDiffer>false</organismsDiffer>
    <experiments>3</experiments>
</comment>
<comment type="interaction">
    <interactant intactId="EBI-81531">
        <id>P11940</id>
    </interactant>
    <interactant intactId="EBI-353779">
        <id>O00571</id>
        <label>DDX3X</label>
    </interactant>
    <organismsDiffer>false</organismsDiffer>
    <experiments>10</experiments>
</comment>
<comment type="interaction">
    <interactant intactId="EBI-81531">
        <id>P11940</id>
    </interactant>
    <interactant intactId="EBI-73440">
        <id>P06730</id>
        <label>EIF4E</label>
    </interactant>
    <organismsDiffer>false</organismsDiffer>
    <experiments>5</experiments>
</comment>
<comment type="interaction">
    <interactant intactId="EBI-81531">
        <id>P11940</id>
    </interactant>
    <interactant intactId="EBI-73711">
        <id>Q04637</id>
        <label>EIF4G1</label>
    </interactant>
    <organismsDiffer>false</organismsDiffer>
    <experiments>4</experiments>
</comment>
<comment type="interaction">
    <interactant intactId="EBI-81531">
        <id>P11940</id>
    </interactant>
    <interactant intactId="EBI-948993">
        <id>P15170</id>
        <label>GSPT1</label>
    </interactant>
    <organismsDiffer>false</organismsDiffer>
    <experiments>2</experiments>
</comment>
<comment type="interaction">
    <interactant intactId="EBI-81531">
        <id>P11940</id>
    </interactant>
    <interactant intactId="EBI-9094806">
        <id>P15170-2</id>
        <label>GSPT1</label>
    </interactant>
    <organismsDiffer>false</organismsDiffer>
    <experiments>2</experiments>
</comment>
<comment type="interaction">
    <interactant intactId="EBI-81531">
        <id>P11940</id>
    </interactant>
    <interactant intactId="EBI-3869637">
        <id>Q8IYD1</id>
        <label>GSPT2</label>
    </interactant>
    <organismsDiffer>false</organismsDiffer>
    <experiments>10</experiments>
</comment>
<comment type="interaction">
    <interactant intactId="EBI-81531">
        <id>P11940</id>
    </interactant>
    <interactant intactId="EBI-432545">
        <id>Q14103-4</id>
        <label>HNRNPD</label>
    </interactant>
    <organismsDiffer>false</organismsDiffer>
    <experiments>2</experiments>
</comment>
<comment type="interaction">
    <interactant intactId="EBI-81531">
        <id>P11940</id>
    </interactant>
    <interactant intactId="EBI-517592">
        <id>P35568</id>
        <label>IRS1</label>
    </interactant>
    <organismsDiffer>false</organismsDiffer>
    <experiments>2</experiments>
</comment>
<comment type="interaction">
    <interactant intactId="EBI-81531">
        <id>P11940</id>
    </interactant>
    <interactant intactId="EBI-1052558">
        <id>Q92615</id>
        <label>LARP4B</label>
    </interactant>
    <organismsDiffer>false</organismsDiffer>
    <experiments>4</experiments>
</comment>
<comment type="interaction">
    <interactant intactId="EBI-81531">
        <id>P11940</id>
    </interactant>
    <interactant intactId="EBI-464743">
        <id>Q09161</id>
        <label>NCBP1</label>
    </interactant>
    <organismsDiffer>false</organismsDiffer>
    <experiments>9</experiments>
</comment>
<comment type="interaction">
    <interactant intactId="EBI-81531">
        <id>P11940</id>
    </interactant>
    <interactant intactId="EBI-1226435">
        <id>Q86U42</id>
        <label>PABPN1</label>
    </interactant>
    <organismsDiffer>false</organismsDiffer>
    <experiments>2</experiments>
</comment>
<comment type="interaction">
    <interactant intactId="EBI-81531">
        <id>P11940</id>
    </interactant>
    <interactant intactId="EBI-81519">
        <id>Q9H074</id>
        <label>PAIP1</label>
    </interactant>
    <organismsDiffer>false</organismsDiffer>
    <experiments>18</experiments>
</comment>
<comment type="interaction">
    <interactant intactId="EBI-81531">
        <id>P11940</id>
    </interactant>
    <interactant intactId="EBI-2957445">
        <id>Q9BPZ3</id>
        <label>PAIP2</label>
    </interactant>
    <organismsDiffer>false</organismsDiffer>
    <experiments>15</experiments>
</comment>
<comment type="interaction">
    <interactant intactId="EBI-81531">
        <id>P11940</id>
    </interactant>
    <interactant intactId="EBI-2513054">
        <id>Q58A45</id>
        <label>PAN3</label>
    </interactant>
    <organismsDiffer>false</organismsDiffer>
    <experiments>4</experiments>
</comment>
<comment type="interaction">
    <interactant intactId="EBI-81531">
        <id>P11940</id>
    </interactant>
    <interactant intactId="EBI-1049832">
        <id>Q96Q15</id>
        <label>SMG1</label>
    </interactant>
    <organismsDiffer>false</organismsDiffer>
    <experiments>2</experiments>
</comment>
<comment type="interaction">
    <interactant intactId="EBI-81531">
        <id>P11940</id>
    </interactant>
    <interactant intactId="EBI-2269715">
        <id>Q8NDV7</id>
        <label>TNRC6A</label>
    </interactant>
    <organismsDiffer>false</organismsDiffer>
    <experiments>3</experiments>
</comment>
<comment type="interaction">
    <interactant intactId="EBI-81531">
        <id>P11940</id>
    </interactant>
    <interactant intactId="EBI-947158">
        <id>Q9UPQ9</id>
        <label>TNRC6B</label>
    </interactant>
    <organismsDiffer>false</organismsDiffer>
    <experiments>3</experiments>
</comment>
<comment type="interaction">
    <interactant intactId="EBI-81531">
        <id>P11940</id>
    </interactant>
    <interactant intactId="EBI-6507625">
        <id>Q9HCJ0</id>
        <label>TNRC6C</label>
    </interactant>
    <organismsDiffer>false</organismsDiffer>
    <experiments>15</experiments>
</comment>
<comment type="interaction">
    <interactant intactId="EBI-81531">
        <id>P11940</id>
    </interactant>
    <interactant intactId="EBI-52312184">
        <id>Q9HCJ0-1</id>
        <label>TNRC6C</label>
    </interactant>
    <organismsDiffer>false</organismsDiffer>
    <experiments>7</experiments>
</comment>
<comment type="interaction">
    <interactant intactId="EBI-81531">
        <id>P11940</id>
    </interactant>
    <interactant intactId="EBI-723281">
        <id>P50616</id>
        <label>TOB1</label>
    </interactant>
    <organismsDiffer>false</organismsDiffer>
    <experiments>4</experiments>
</comment>
<comment type="interaction">
    <interactant intactId="EBI-81531">
        <id>P11940</id>
    </interactant>
    <interactant intactId="EBI-2562000">
        <id>Q14106</id>
        <label>TOB2</label>
    </interactant>
    <organismsDiffer>false</organismsDiffer>
    <experiments>5</experiments>
</comment>
<comment type="interaction">
    <interactant intactId="EBI-81531">
        <id>P11940</id>
    </interactant>
    <interactant intactId="EBI-356498">
        <id>P62258</id>
        <label>YWHAE</label>
    </interactant>
    <organismsDiffer>false</organismsDiffer>
    <experiments>2</experiments>
</comment>
<comment type="interaction">
    <interactant intactId="EBI-81531">
        <id>P11940</id>
    </interactant>
    <interactant intactId="EBI-26968662">
        <id>P14240</id>
        <label>L</label>
    </interactant>
    <organismsDiffer>true</organismsDiffer>
    <experiments>2</experiments>
</comment>
<comment type="interaction">
    <interactant intactId="EBI-81531">
        <id>P11940</id>
    </interactant>
    <interactant intactId="EBI-25475856">
        <id>P0DTC9</id>
        <label>N</label>
    </interactant>
    <organismsDiffer>true</organismsDiffer>
    <experiments>5</experiments>
</comment>
<comment type="interaction">
    <interactant intactId="EBI-81531">
        <id>P11940</id>
    </interactant>
    <interactant intactId="EBI-8172439">
        <id>P15130</id>
        <label>N</label>
    </interactant>
    <organismsDiffer>true</organismsDiffer>
    <experiments>4</experiments>
</comment>
<comment type="interaction">
    <interactant intactId="EBI-81531">
        <id>P11940</id>
    </interactant>
    <interactant intactId="EBI-38273351">
        <id>O55778</id>
        <label>P/V/C</label>
    </interactant>
    <organismsDiffer>true</organismsDiffer>
    <experiments>2</experiments>
</comment>
<comment type="interaction">
    <interactant intactId="EBI-81531">
        <id>P11940</id>
    </interactant>
    <interactant intactId="EBI-7967856">
        <id>Q9J0X9</id>
        <label>UL54</label>
    </interactant>
    <organismsDiffer>true</organismsDiffer>
    <experiments>3</experiments>
</comment>
<comment type="interaction">
    <interactant intactId="EBI-352013">
        <id>P11940-1</id>
    </interactant>
    <interactant intactId="EBI-25649748">
        <id>P10527</id>
        <label>N</label>
    </interactant>
    <organismsDiffer>true</organismsDiffer>
    <experiments>3</experiments>
</comment>
<comment type="subcellular location">
    <subcellularLocation>
        <location evidence="26 29 31 41 44 47 49">Cytoplasm</location>
    </subcellularLocation>
    <subcellularLocation>
        <location evidence="29 30 38">Cytoplasm</location>
        <location evidence="29 30 38">Stress granule</location>
    </subcellularLocation>
    <subcellularLocation>
        <location evidence="21 49">Nucleus</location>
    </subcellularLocation>
    <subcellularLocation>
        <location evidence="41">Cell projection</location>
        <location evidence="41">Lamellipodium</location>
    </subcellularLocation>
    <text evidence="17 29 41 44 49">Localized in cytoplasmic mRNP granules containing untranslated mRNAs (PubMed:17289661). Shuttles between the cytoplasm and the nucleus (PubMed:9582337). During stress and in the absence of DDX3X, localizes to the nucleus (PubMed:21883093). At the leading edge of migrating fibroblasts, colocalizes with DDX3X (PubMed:28733330). Relocalizes to cytoplasmic stress granules upon cellular stress where it colocalizes with ENDOV (PubMed:27573237). In case of HRSV infection, localizes in cytoplasmic inclusion bodies substructures called inclusion bodies associated granules (IBAGs) (PubMed:31649314).</text>
</comment>
<comment type="alternative products">
    <event type="alternative splicing"/>
    <isoform>
        <id>P11940-1</id>
        <name>1</name>
        <sequence type="displayed"/>
    </isoform>
    <isoform>
        <id>P11940-2</id>
        <name>2</name>
        <sequence type="described" ref="VSP_009846"/>
    </isoform>
</comment>
<comment type="tissue specificity">
    <text>Ubiquitous.</text>
</comment>
<comment type="domain">
    <text evidence="6 10">The RNA-binding domains RRM1 and RRM2 and the C-terminus (last 138 amino acids) regions interact with the PABPC1-interacting motif-1 (PAM1) and -2 (PAM2) of PAIP1, respectively.</text>
</comment>
<comment type="domain">
    <text evidence="6 23">The RNA-binding domains RRM2 and RRM3 and the C-terminus (last 138 amino acids) regions interact with the PABPC1-interacting motif-1 (PAM1) and -2 (PAM2) of PAIP2, respectively.</text>
</comment>
<comment type="PTM">
    <text evidence="11">Phosphorylated by MAPKAPK2.</text>
</comment>
<comment type="PTM">
    <text evidence="8 50 52">Methylated by CARM1. Arg-493 is dimethylated, probably to asymmetric dimethylarginine.</text>
</comment>
<comment type="miscellaneous">
    <text>Many viruses shutoff host mRNA translational machinery by inhibiting cellular PABPC1 activity using different mechanisms. Picornaviruses, caliciviruses or lentiviruses encode proteases that cleave PABPC1 at several defined sites in the proline-rich linker region between RRMs and the C-terminal domain. Rotaviruses, gammherpesviruses and bunyamwera virus relocalize PABPC1 from the cytoplasm to the nucleus thus altering its function. Many of these viruses translate their mRNA in a PABPC1-independent manner and are unaffected by host PABPC1 inhibition.</text>
</comment>
<comment type="similarity">
    <text evidence="55">Belongs to the polyadenylate-binding protein type-1 family.</text>
</comment>
<comment type="caution">
    <text evidence="55">Was termed (Ref.5) polyadenylate binding protein II.</text>
</comment>
<protein>
    <recommendedName>
        <fullName evidence="55">Polyadenylate-binding protein 1</fullName>
        <shortName>PABP-1</shortName>
        <shortName>Poly(A)-binding protein 1</shortName>
    </recommendedName>
</protein>
<proteinExistence type="evidence at protein level"/>
<dbReference type="EMBL" id="Y00345">
    <property type="protein sequence ID" value="CAA68428.1"/>
    <property type="molecule type" value="mRNA"/>
</dbReference>
<dbReference type="EMBL" id="U68104">
    <property type="protein sequence ID" value="AAD08718.1"/>
    <property type="molecule type" value="Genomic_DNA"/>
</dbReference>
<dbReference type="EMBL" id="U68093">
    <property type="protein sequence ID" value="AAD08718.1"/>
    <property type="status" value="JOINED"/>
    <property type="molecule type" value="Genomic_DNA"/>
</dbReference>
<dbReference type="EMBL" id="U68094">
    <property type="protein sequence ID" value="AAD08718.1"/>
    <property type="status" value="JOINED"/>
    <property type="molecule type" value="Genomic_DNA"/>
</dbReference>
<dbReference type="EMBL" id="U68095">
    <property type="protein sequence ID" value="AAD08718.1"/>
    <property type="status" value="JOINED"/>
    <property type="molecule type" value="Genomic_DNA"/>
</dbReference>
<dbReference type="EMBL" id="U68097">
    <property type="protein sequence ID" value="AAD08718.1"/>
    <property type="status" value="JOINED"/>
    <property type="molecule type" value="Genomic_DNA"/>
</dbReference>
<dbReference type="EMBL" id="U68098">
    <property type="protein sequence ID" value="AAD08718.1"/>
    <property type="status" value="JOINED"/>
    <property type="molecule type" value="Genomic_DNA"/>
</dbReference>
<dbReference type="EMBL" id="U68099">
    <property type="protein sequence ID" value="AAD08718.1"/>
    <property type="status" value="JOINED"/>
    <property type="molecule type" value="Genomic_DNA"/>
</dbReference>
<dbReference type="EMBL" id="U68100">
    <property type="protein sequence ID" value="AAD08718.1"/>
    <property type="status" value="JOINED"/>
    <property type="molecule type" value="Genomic_DNA"/>
</dbReference>
<dbReference type="EMBL" id="U68101">
    <property type="protein sequence ID" value="AAD08718.1"/>
    <property type="status" value="JOINED"/>
    <property type="molecule type" value="Genomic_DNA"/>
</dbReference>
<dbReference type="EMBL" id="U68102">
    <property type="protein sequence ID" value="AAD08718.1"/>
    <property type="status" value="JOINED"/>
    <property type="molecule type" value="Genomic_DNA"/>
</dbReference>
<dbReference type="EMBL" id="U68103">
    <property type="protein sequence ID" value="AAD08718.1"/>
    <property type="status" value="JOINED"/>
    <property type="molecule type" value="Genomic_DNA"/>
</dbReference>
<dbReference type="EMBL" id="AP001205">
    <property type="status" value="NOT_ANNOTATED_CDS"/>
    <property type="molecule type" value="Genomic_DNA"/>
</dbReference>
<dbReference type="EMBL" id="BC015958">
    <property type="protein sequence ID" value="AAH15958.1"/>
    <property type="molecule type" value="mRNA"/>
</dbReference>
<dbReference type="EMBL" id="BC023520">
    <property type="protein sequence ID" value="AAH23520.1"/>
    <property type="molecule type" value="mRNA"/>
</dbReference>
<dbReference type="EMBL" id="Z48501">
    <property type="protein sequence ID" value="CAA88401.1"/>
    <property type="molecule type" value="mRNA"/>
</dbReference>
<dbReference type="CCDS" id="CCDS6289.1">
    <molecule id="P11940-1"/>
</dbReference>
<dbReference type="PIR" id="A93668">
    <property type="entry name" value="DNHUPA"/>
</dbReference>
<dbReference type="PIR" id="S52491">
    <property type="entry name" value="S52491"/>
</dbReference>
<dbReference type="RefSeq" id="NP_002559.2">
    <molecule id="P11940-1"/>
    <property type="nucleotide sequence ID" value="NM_002568.3"/>
</dbReference>
<dbReference type="RefSeq" id="XP_005250918.1">
    <molecule id="P11940-1"/>
    <property type="nucleotide sequence ID" value="XM_005250861.4"/>
</dbReference>
<dbReference type="RefSeq" id="XP_047277650.1">
    <molecule id="P11940-1"/>
    <property type="nucleotide sequence ID" value="XM_047421694.1"/>
</dbReference>
<dbReference type="RefSeq" id="XP_054216266.1">
    <molecule id="P11940-1"/>
    <property type="nucleotide sequence ID" value="XM_054360291.1"/>
</dbReference>
<dbReference type="RefSeq" id="XP_054216267.1">
    <molecule id="P11940-1"/>
    <property type="nucleotide sequence ID" value="XM_054360292.1"/>
</dbReference>
<dbReference type="PDB" id="1CVJ">
    <property type="method" value="X-ray"/>
    <property type="resolution" value="2.60 A"/>
    <property type="chains" value="A/B/C/D/E/F/G/H=1-190"/>
</dbReference>
<dbReference type="PDB" id="1G9L">
    <property type="method" value="NMR"/>
    <property type="chains" value="A=498-636"/>
</dbReference>
<dbReference type="PDB" id="1JGN">
    <property type="method" value="NMR"/>
    <property type="chains" value="A=544-636"/>
</dbReference>
<dbReference type="PDB" id="1JH4">
    <property type="method" value="NMR"/>
    <property type="chains" value="A=544-636"/>
</dbReference>
<dbReference type="PDB" id="2K8G">
    <property type="method" value="NMR"/>
    <property type="chains" value="A=90-182"/>
</dbReference>
<dbReference type="PDB" id="2RQG">
    <property type="method" value="NMR"/>
    <property type="chains" value="B=541-623"/>
</dbReference>
<dbReference type="PDB" id="2RQH">
    <property type="method" value="NMR"/>
    <property type="chains" value="B=541-623"/>
</dbReference>
<dbReference type="PDB" id="2X04">
    <property type="method" value="X-ray"/>
    <property type="resolution" value="1.49 A"/>
    <property type="chains" value="A/B=545-619"/>
</dbReference>
<dbReference type="PDB" id="3KTP">
    <property type="method" value="X-ray"/>
    <property type="resolution" value="1.50 A"/>
    <property type="chains" value="A=544-626"/>
</dbReference>
<dbReference type="PDB" id="3KTR">
    <property type="method" value="X-ray"/>
    <property type="resolution" value="1.70 A"/>
    <property type="chains" value="A=544-626"/>
</dbReference>
<dbReference type="PDB" id="3KUI">
    <property type="method" value="X-ray"/>
    <property type="resolution" value="2.30 A"/>
    <property type="chains" value="A=544-626"/>
</dbReference>
<dbReference type="PDB" id="3KUJ">
    <property type="method" value="X-ray"/>
    <property type="resolution" value="1.40 A"/>
    <property type="chains" value="A=544-626"/>
</dbReference>
<dbReference type="PDB" id="3KUR">
    <property type="method" value="X-ray"/>
    <property type="resolution" value="2.50 A"/>
    <property type="chains" value="A/B/C/D/E/F/G/H=544-617"/>
</dbReference>
<dbReference type="PDB" id="3KUS">
    <property type="method" value="X-ray"/>
    <property type="resolution" value="1.40 A"/>
    <property type="chains" value="A/B=544-626"/>
</dbReference>
<dbReference type="PDB" id="3KUT">
    <property type="method" value="X-ray"/>
    <property type="resolution" value="1.50 A"/>
    <property type="chains" value="A/B=544-626"/>
</dbReference>
<dbReference type="PDB" id="3PKN">
    <property type="method" value="X-ray"/>
    <property type="resolution" value="1.80 A"/>
    <property type="chains" value="A=544-626"/>
</dbReference>
<dbReference type="PDB" id="3PTH">
    <property type="method" value="X-ray"/>
    <property type="resolution" value="1.70 A"/>
    <property type="chains" value="A=543-621"/>
</dbReference>
<dbReference type="PDB" id="4F02">
    <property type="method" value="X-ray"/>
    <property type="resolution" value="2.00 A"/>
    <property type="chains" value="A/D=1-190"/>
</dbReference>
<dbReference type="PDB" id="4F25">
    <property type="method" value="X-ray"/>
    <property type="resolution" value="1.90 A"/>
    <property type="chains" value="A=99-199"/>
</dbReference>
<dbReference type="PDB" id="4F26">
    <property type="method" value="X-ray"/>
    <property type="resolution" value="2.00 A"/>
    <property type="chains" value="A=99-199"/>
</dbReference>
<dbReference type="PDB" id="5DX1">
    <property type="method" value="X-ray"/>
    <property type="resolution" value="1.93 A"/>
    <property type="chains" value="F/G/H/I=449-466"/>
</dbReference>
<dbReference type="PDB" id="5DX8">
    <property type="method" value="X-ray"/>
    <property type="resolution" value="1.94 A"/>
    <property type="chains" value="E/F/G/H=449-466"/>
</dbReference>
<dbReference type="PDB" id="5DXA">
    <property type="method" value="X-ray"/>
    <property type="resolution" value="2.07 A"/>
    <property type="chains" value="F/G/I=449-466"/>
</dbReference>
<dbReference type="PDB" id="5LGP">
    <property type="method" value="X-ray"/>
    <property type="resolution" value="2.04 A"/>
    <property type="chains" value="E/F/G/H=447-458"/>
</dbReference>
<dbReference type="PDB" id="5LGQ">
    <property type="method" value="X-ray"/>
    <property type="resolution" value="2.11 A"/>
    <property type="chains" value="E/F/G/H=456-466"/>
</dbReference>
<dbReference type="PDB" id="5LGR">
    <property type="method" value="X-ray"/>
    <property type="resolution" value="2.00 A"/>
    <property type="chains" value="E/F/G/H=447-458"/>
</dbReference>
<dbReference type="PDB" id="5LGS">
    <property type="method" value="X-ray"/>
    <property type="resolution" value="2.10 A"/>
    <property type="chains" value="E/F/G/H=456-464"/>
</dbReference>
<dbReference type="PDB" id="7BN3">
    <property type="method" value="X-ray"/>
    <property type="resolution" value="1.93 A"/>
    <property type="chains" value="A/B/C=544-626"/>
</dbReference>
<dbReference type="PDB" id="8SMO">
    <property type="method" value="X-ray"/>
    <property type="resolution" value="3.00 A"/>
    <property type="chains" value="A/C/E/G/I/K/M/O=556-626"/>
</dbReference>
<dbReference type="PDBsum" id="1CVJ"/>
<dbReference type="PDBsum" id="1G9L"/>
<dbReference type="PDBsum" id="1JGN"/>
<dbReference type="PDBsum" id="1JH4"/>
<dbReference type="PDBsum" id="2K8G"/>
<dbReference type="PDBsum" id="2RQG"/>
<dbReference type="PDBsum" id="2RQH"/>
<dbReference type="PDBsum" id="2X04"/>
<dbReference type="PDBsum" id="3KTP"/>
<dbReference type="PDBsum" id="3KTR"/>
<dbReference type="PDBsum" id="3KUI"/>
<dbReference type="PDBsum" id="3KUJ"/>
<dbReference type="PDBsum" id="3KUR"/>
<dbReference type="PDBsum" id="3KUS"/>
<dbReference type="PDBsum" id="3KUT"/>
<dbReference type="PDBsum" id="3PKN"/>
<dbReference type="PDBsum" id="3PTH"/>
<dbReference type="PDBsum" id="4F02"/>
<dbReference type="PDBsum" id="4F25"/>
<dbReference type="PDBsum" id="4F26"/>
<dbReference type="PDBsum" id="5DX1"/>
<dbReference type="PDBsum" id="5DX8"/>
<dbReference type="PDBsum" id="5DXA"/>
<dbReference type="PDBsum" id="5LGP"/>
<dbReference type="PDBsum" id="5LGQ"/>
<dbReference type="PDBsum" id="5LGR"/>
<dbReference type="PDBsum" id="5LGS"/>
<dbReference type="PDBsum" id="7BN3"/>
<dbReference type="PDBsum" id="8SMO"/>
<dbReference type="BMRB" id="P11940"/>
<dbReference type="SMR" id="P11940"/>
<dbReference type="BioGRID" id="117939">
    <property type="interactions" value="687"/>
</dbReference>
<dbReference type="ComplexPortal" id="CPX-1076">
    <property type="entry name" value="mCRD-poly(A)-bridging complex"/>
</dbReference>
<dbReference type="CORUM" id="P11940"/>
<dbReference type="DIP" id="DIP-31613N"/>
<dbReference type="ELM" id="P11940"/>
<dbReference type="FunCoup" id="P11940">
    <property type="interactions" value="3114"/>
</dbReference>
<dbReference type="IntAct" id="P11940">
    <property type="interactions" value="270"/>
</dbReference>
<dbReference type="MINT" id="P11940"/>
<dbReference type="STRING" id="9606.ENSP00000313007"/>
<dbReference type="BindingDB" id="P11940"/>
<dbReference type="ChEMBL" id="CHEMBL1293286"/>
<dbReference type="MoonDB" id="P11940">
    <property type="type" value="Predicted"/>
</dbReference>
<dbReference type="GlyCosmos" id="P11940">
    <property type="glycosylation" value="1 site, 1 glycan"/>
</dbReference>
<dbReference type="GlyGen" id="P11940">
    <property type="glycosylation" value="8 sites, 1 N-linked glycan (1 site), 1 O-linked glycan (5 sites)"/>
</dbReference>
<dbReference type="iPTMnet" id="P11940"/>
<dbReference type="MetOSite" id="P11940"/>
<dbReference type="PhosphoSitePlus" id="P11940"/>
<dbReference type="SwissPalm" id="P11940"/>
<dbReference type="BioMuta" id="PABPC1"/>
<dbReference type="DMDM" id="3183544"/>
<dbReference type="jPOST" id="P11940"/>
<dbReference type="MassIVE" id="P11940"/>
<dbReference type="PaxDb" id="9606-ENSP00000313007"/>
<dbReference type="PeptideAtlas" id="P11940"/>
<dbReference type="ProteomicsDB" id="52814">
    <molecule id="P11940-1"/>
</dbReference>
<dbReference type="ProteomicsDB" id="52815">
    <molecule id="P11940-2"/>
</dbReference>
<dbReference type="Pumba" id="P11940"/>
<dbReference type="Antibodypedia" id="3159">
    <property type="antibodies" value="241 antibodies from 31 providers"/>
</dbReference>
<dbReference type="DNASU" id="26986"/>
<dbReference type="Ensembl" id="ENST00000318607.10">
    <molecule id="P11940-1"/>
    <property type="protein sequence ID" value="ENSP00000313007.5"/>
    <property type="gene ID" value="ENSG00000070756.17"/>
</dbReference>
<dbReference type="Ensembl" id="ENST00000520142.2">
    <molecule id="P11940-1"/>
    <property type="protein sequence ID" value="ENSP00000430012.2"/>
    <property type="gene ID" value="ENSG00000070756.17"/>
</dbReference>
<dbReference type="Ensembl" id="ENST00000520804.2">
    <molecule id="P11940-1"/>
    <property type="protein sequence ID" value="ENSP00000428749.2"/>
    <property type="gene ID" value="ENSG00000070756.17"/>
</dbReference>
<dbReference type="Ensembl" id="ENST00000521865.6">
    <molecule id="P11940-1"/>
    <property type="protein sequence ID" value="ENSP00000429119.2"/>
    <property type="gene ID" value="ENSG00000070756.17"/>
</dbReference>
<dbReference type="Ensembl" id="ENST00000522658.6">
    <molecule id="P11940-1"/>
    <property type="protein sequence ID" value="ENSP00000428840.2"/>
    <property type="gene ID" value="ENSG00000070756.17"/>
</dbReference>
<dbReference type="Ensembl" id="ENST00000522720.2">
    <molecule id="P11940-1"/>
    <property type="protein sequence ID" value="ENSP00000429790.2"/>
    <property type="gene ID" value="ENSG00000070756.17"/>
</dbReference>
<dbReference type="Ensembl" id="ENST00000523555.6">
    <molecule id="P11940-1"/>
    <property type="protein sequence ID" value="ENSP00000429892.2"/>
    <property type="gene ID" value="ENSG00000070756.17"/>
</dbReference>
<dbReference type="GeneID" id="26986"/>
<dbReference type="KEGG" id="hsa:26986"/>
<dbReference type="MANE-Select" id="ENST00000318607.10">
    <property type="protein sequence ID" value="ENSP00000313007.5"/>
    <property type="RefSeq nucleotide sequence ID" value="NM_002568.4"/>
    <property type="RefSeq protein sequence ID" value="NP_002559.2"/>
</dbReference>
<dbReference type="UCSC" id="uc003yjs.2">
    <molecule id="P11940-1"/>
    <property type="organism name" value="human"/>
</dbReference>
<dbReference type="AGR" id="HGNC:8554"/>
<dbReference type="CTD" id="26986"/>
<dbReference type="DisGeNET" id="26986"/>
<dbReference type="GeneCards" id="PABPC1"/>
<dbReference type="HGNC" id="HGNC:8554">
    <property type="gene designation" value="PABPC1"/>
</dbReference>
<dbReference type="HPA" id="ENSG00000070756">
    <property type="expression patterns" value="Low tissue specificity"/>
</dbReference>
<dbReference type="MalaCards" id="PABPC1"/>
<dbReference type="MIM" id="604679">
    <property type="type" value="gene"/>
</dbReference>
<dbReference type="neXtProt" id="NX_P11940"/>
<dbReference type="OpenTargets" id="ENSG00000070756"/>
<dbReference type="PharmGKB" id="PA32880"/>
<dbReference type="VEuPathDB" id="HostDB:ENSG00000070756"/>
<dbReference type="eggNOG" id="KOG0123">
    <property type="taxonomic scope" value="Eukaryota"/>
</dbReference>
<dbReference type="GeneTree" id="ENSGT00940000153773"/>
<dbReference type="InParanoid" id="P11940"/>
<dbReference type="OMA" id="MNGRMLN"/>
<dbReference type="OrthoDB" id="9520506at2759"/>
<dbReference type="PAN-GO" id="P11940">
    <property type="GO annotations" value="7 GO annotations based on evolutionary models"/>
</dbReference>
<dbReference type="PhylomeDB" id="P11940"/>
<dbReference type="TreeFam" id="TF300458"/>
<dbReference type="PathwayCommons" id="P11940"/>
<dbReference type="Reactome" id="R-HSA-156827">
    <property type="pathway name" value="L13a-mediated translational silencing of Ceruloplasmin expression"/>
</dbReference>
<dbReference type="Reactome" id="R-HSA-429947">
    <property type="pathway name" value="Deadenylation of mRNA"/>
</dbReference>
<dbReference type="Reactome" id="R-HSA-450408">
    <property type="pathway name" value="AUF1 (hnRNP D0) binds and destabilizes mRNA"/>
</dbReference>
<dbReference type="Reactome" id="R-HSA-72649">
    <property type="pathway name" value="Translation initiation complex formation"/>
</dbReference>
<dbReference type="Reactome" id="R-HSA-9010553">
    <property type="pathway name" value="Regulation of expression of SLITs and ROBOs"/>
</dbReference>
<dbReference type="Reactome" id="R-HSA-975956">
    <property type="pathway name" value="Nonsense Mediated Decay (NMD) independent of the Exon Junction Complex (EJC)"/>
</dbReference>
<dbReference type="Reactome" id="R-HSA-975957">
    <property type="pathway name" value="Nonsense Mediated Decay (NMD) enhanced by the Exon Junction Complex (EJC)"/>
</dbReference>
<dbReference type="Reactome" id="R-HSA-9820841">
    <property type="pathway name" value="M-decay: degradation of maternal mRNAs by maternally stored factors"/>
</dbReference>
<dbReference type="Reactome" id="R-HSA-9820865">
    <property type="pathway name" value="Z-decay: degradation of maternal mRNAs by zygotically expressed factors"/>
</dbReference>
<dbReference type="SignaLink" id="P11940"/>
<dbReference type="SIGNOR" id="P11940"/>
<dbReference type="BioGRID-ORCS" id="26986">
    <property type="hits" value="628 hits in 1113 CRISPR screens"/>
</dbReference>
<dbReference type="CD-CODE" id="232F8A39">
    <property type="entry name" value="P-body"/>
</dbReference>
<dbReference type="CD-CODE" id="91857CE7">
    <property type="entry name" value="Nucleolus"/>
</dbReference>
<dbReference type="CD-CODE" id="DEE660B4">
    <property type="entry name" value="Stress granule"/>
</dbReference>
<dbReference type="CD-CODE" id="E1879998">
    <property type="entry name" value="Synthetic Condensate 000375"/>
</dbReference>
<dbReference type="CD-CODE" id="F85A2E29">
    <property type="entry name" value="IMP1 RNP granule"/>
</dbReference>
<dbReference type="CD-CODE" id="FB4E32DD">
    <property type="entry name" value="Presynaptic clusters and postsynaptic densities"/>
</dbReference>
<dbReference type="ChiTaRS" id="PABPC1">
    <property type="organism name" value="human"/>
</dbReference>
<dbReference type="EvolutionaryTrace" id="P11940"/>
<dbReference type="GeneWiki" id="PABPC1"/>
<dbReference type="GenomeRNAi" id="26986"/>
<dbReference type="Pharos" id="P11940">
    <property type="development level" value="Tbio"/>
</dbReference>
<dbReference type="PRO" id="PR:P11940"/>
<dbReference type="Proteomes" id="UP000005640">
    <property type="component" value="Chromosome 8"/>
</dbReference>
<dbReference type="RNAct" id="P11940">
    <property type="molecule type" value="protein"/>
</dbReference>
<dbReference type="Bgee" id="ENSG00000070756">
    <property type="expression patterns" value="Expressed in parotid gland and 204 other cell types or tissues"/>
</dbReference>
<dbReference type="ExpressionAtlas" id="P11940">
    <property type="expression patterns" value="baseline and differential"/>
</dbReference>
<dbReference type="GO" id="GO:0071013">
    <property type="term" value="C:catalytic step 2 spliceosome"/>
    <property type="evidence" value="ECO:0000314"/>
    <property type="project" value="UniProtKB"/>
</dbReference>
<dbReference type="GO" id="GO:0031252">
    <property type="term" value="C:cell leading edge"/>
    <property type="evidence" value="ECO:0000314"/>
    <property type="project" value="UniProtKB"/>
</dbReference>
<dbReference type="GO" id="GO:0005737">
    <property type="term" value="C:cytoplasm"/>
    <property type="evidence" value="ECO:0000314"/>
    <property type="project" value="UniProtKB"/>
</dbReference>
<dbReference type="GO" id="GO:0036464">
    <property type="term" value="C:cytoplasmic ribonucleoprotein granule"/>
    <property type="evidence" value="ECO:0000314"/>
    <property type="project" value="ParkinsonsUK-UCL"/>
</dbReference>
<dbReference type="GO" id="GO:0010494">
    <property type="term" value="C:cytoplasmic stress granule"/>
    <property type="evidence" value="ECO:0000314"/>
    <property type="project" value="UniProtKB"/>
</dbReference>
<dbReference type="GO" id="GO:0005829">
    <property type="term" value="C:cytosol"/>
    <property type="evidence" value="ECO:0000314"/>
    <property type="project" value="ComplexPortal"/>
</dbReference>
<dbReference type="GO" id="GO:0070062">
    <property type="term" value="C:extracellular exosome"/>
    <property type="evidence" value="ECO:0007005"/>
    <property type="project" value="UniProtKB"/>
</dbReference>
<dbReference type="GO" id="GO:0005925">
    <property type="term" value="C:focal adhesion"/>
    <property type="evidence" value="ECO:0007005"/>
    <property type="project" value="UniProtKB"/>
</dbReference>
<dbReference type="GO" id="GO:0030027">
    <property type="term" value="C:lamellipodium"/>
    <property type="evidence" value="ECO:0007669"/>
    <property type="project" value="UniProtKB-SubCell"/>
</dbReference>
<dbReference type="GO" id="GO:0106002">
    <property type="term" value="C:mCRD-mediated mRNA stability complex"/>
    <property type="evidence" value="ECO:0000353"/>
    <property type="project" value="ComplexPortal"/>
</dbReference>
<dbReference type="GO" id="GO:0016020">
    <property type="term" value="C:membrane"/>
    <property type="evidence" value="ECO:0007005"/>
    <property type="project" value="UniProtKB"/>
</dbReference>
<dbReference type="GO" id="GO:0005634">
    <property type="term" value="C:nucleus"/>
    <property type="evidence" value="ECO:0000314"/>
    <property type="project" value="MGI"/>
</dbReference>
<dbReference type="GO" id="GO:1990904">
    <property type="term" value="C:ribonucleoprotein complex"/>
    <property type="evidence" value="ECO:0000314"/>
    <property type="project" value="UniProtKB"/>
</dbReference>
<dbReference type="GO" id="GO:0003730">
    <property type="term" value="F:mRNA 3'-UTR binding"/>
    <property type="evidence" value="ECO:0000314"/>
    <property type="project" value="UniProtKB"/>
</dbReference>
<dbReference type="GO" id="GO:0003729">
    <property type="term" value="F:mRNA binding"/>
    <property type="evidence" value="ECO:0000269"/>
    <property type="project" value="DisProt"/>
</dbReference>
<dbReference type="GO" id="GO:0008143">
    <property type="term" value="F:poly(A) binding"/>
    <property type="evidence" value="ECO:0000314"/>
    <property type="project" value="MGI"/>
</dbReference>
<dbReference type="GO" id="GO:0008266">
    <property type="term" value="F:poly(U) RNA binding"/>
    <property type="evidence" value="ECO:0000314"/>
    <property type="project" value="MGI"/>
</dbReference>
<dbReference type="GO" id="GO:0003723">
    <property type="term" value="F:RNA binding"/>
    <property type="evidence" value="ECO:0000314"/>
    <property type="project" value="CAFA"/>
</dbReference>
<dbReference type="GO" id="GO:0008494">
    <property type="term" value="F:translation activator activity"/>
    <property type="evidence" value="ECO:0000304"/>
    <property type="project" value="UniProtKB"/>
</dbReference>
<dbReference type="GO" id="GO:0070934">
    <property type="term" value="P:CRD-mediated mRNA stabilization"/>
    <property type="evidence" value="ECO:0000314"/>
    <property type="project" value="ComplexPortal"/>
</dbReference>
<dbReference type="GO" id="GO:0000398">
    <property type="term" value="P:mRNA splicing, via spliceosome"/>
    <property type="evidence" value="ECO:0000305"/>
    <property type="project" value="UniProtKB"/>
</dbReference>
<dbReference type="GO" id="GO:0048255">
    <property type="term" value="P:mRNA stabilization"/>
    <property type="evidence" value="ECO:0000304"/>
    <property type="project" value="UniProtKB"/>
</dbReference>
<dbReference type="GO" id="GO:1900152">
    <property type="term" value="P:negative regulation of nuclear-transcribed mRNA catabolic process, deadenylation-dependent decay"/>
    <property type="evidence" value="ECO:0000314"/>
    <property type="project" value="ComplexPortal"/>
</dbReference>
<dbReference type="GO" id="GO:2000623">
    <property type="term" value="P:negative regulation of nuclear-transcribed mRNA catabolic process, nonsense-mediated decay"/>
    <property type="evidence" value="ECO:0000314"/>
    <property type="project" value="UniProtKB"/>
</dbReference>
<dbReference type="GO" id="GO:0000184">
    <property type="term" value="P:nuclear-transcribed mRNA catabolic process, nonsense-mediated decay"/>
    <property type="evidence" value="ECO:0007669"/>
    <property type="project" value="UniProtKB-KW"/>
</dbReference>
<dbReference type="GO" id="GO:2000767">
    <property type="term" value="P:positive regulation of cytoplasmic translation"/>
    <property type="evidence" value="ECO:0000314"/>
    <property type="project" value="ComplexPortal"/>
</dbReference>
<dbReference type="GO" id="GO:1900153">
    <property type="term" value="P:positive regulation of nuclear-transcribed mRNA catabolic process, deadenylation-dependent decay"/>
    <property type="evidence" value="ECO:0000250"/>
    <property type="project" value="UniProtKB"/>
</dbReference>
<dbReference type="GO" id="GO:0060213">
    <property type="term" value="P:positive regulation of nuclear-transcribed mRNA poly(A) tail shortening"/>
    <property type="evidence" value="ECO:0000250"/>
    <property type="project" value="UniProtKB"/>
</dbReference>
<dbReference type="GO" id="GO:0045070">
    <property type="term" value="P:positive regulation of viral genome replication"/>
    <property type="evidence" value="ECO:0000315"/>
    <property type="project" value="UniProtKB"/>
</dbReference>
<dbReference type="GO" id="GO:0031047">
    <property type="term" value="P:regulatory ncRNA-mediated gene silencing"/>
    <property type="evidence" value="ECO:0000250"/>
    <property type="project" value="UniProtKB"/>
</dbReference>
<dbReference type="CDD" id="cd12378">
    <property type="entry name" value="RRM1_I_PABPs"/>
    <property type="match status" value="1"/>
</dbReference>
<dbReference type="CDD" id="cd12379">
    <property type="entry name" value="RRM2_I_PABPs"/>
    <property type="match status" value="1"/>
</dbReference>
<dbReference type="CDD" id="cd12380">
    <property type="entry name" value="RRM3_I_PABPs"/>
    <property type="match status" value="1"/>
</dbReference>
<dbReference type="CDD" id="cd12381">
    <property type="entry name" value="RRM4_I_PABPs"/>
    <property type="match status" value="1"/>
</dbReference>
<dbReference type="FunFam" id="1.10.1900.10:FF:000001">
    <property type="entry name" value="Polyadenylate-binding protein"/>
    <property type="match status" value="1"/>
</dbReference>
<dbReference type="FunFam" id="3.30.70.330:FF:000003">
    <property type="entry name" value="Polyadenylate-binding protein"/>
    <property type="match status" value="1"/>
</dbReference>
<dbReference type="FunFam" id="3.30.70.330:FF:000021">
    <property type="entry name" value="Polyadenylate-binding protein"/>
    <property type="match status" value="1"/>
</dbReference>
<dbReference type="FunFam" id="3.30.70.330:FF:000042">
    <property type="entry name" value="Polyadenylate-binding protein"/>
    <property type="match status" value="1"/>
</dbReference>
<dbReference type="FunFam" id="3.30.70.330:FF:000154">
    <property type="entry name" value="Polyadenylate-binding protein"/>
    <property type="match status" value="1"/>
</dbReference>
<dbReference type="Gene3D" id="3.30.70.330">
    <property type="match status" value="4"/>
</dbReference>
<dbReference type="Gene3D" id="1.10.1900.10">
    <property type="entry name" value="c-terminal domain of poly(a) binding protein"/>
    <property type="match status" value="1"/>
</dbReference>
<dbReference type="IDEAL" id="IID00193"/>
<dbReference type="InterPro" id="IPR012677">
    <property type="entry name" value="Nucleotide-bd_a/b_plait_sf"/>
</dbReference>
<dbReference type="InterPro" id="IPR036053">
    <property type="entry name" value="PABP-dom"/>
</dbReference>
<dbReference type="InterPro" id="IPR006515">
    <property type="entry name" value="PABP_1234"/>
</dbReference>
<dbReference type="InterPro" id="IPR002004">
    <property type="entry name" value="PABP_HYD_C"/>
</dbReference>
<dbReference type="InterPro" id="IPR034364">
    <property type="entry name" value="PABP_RRM1"/>
</dbReference>
<dbReference type="InterPro" id="IPR035979">
    <property type="entry name" value="RBD_domain_sf"/>
</dbReference>
<dbReference type="InterPro" id="IPR045305">
    <property type="entry name" value="RRM2_I_PABPs"/>
</dbReference>
<dbReference type="InterPro" id="IPR000504">
    <property type="entry name" value="RRM_dom"/>
</dbReference>
<dbReference type="InterPro" id="IPR003954">
    <property type="entry name" value="RRM_dom_euk"/>
</dbReference>
<dbReference type="NCBIfam" id="TIGR01628">
    <property type="entry name" value="PABP-1234"/>
    <property type="match status" value="1"/>
</dbReference>
<dbReference type="PANTHER" id="PTHR24012">
    <property type="entry name" value="RNA BINDING PROTEIN"/>
    <property type="match status" value="1"/>
</dbReference>
<dbReference type="Pfam" id="PF00658">
    <property type="entry name" value="MLLE"/>
    <property type="match status" value="1"/>
</dbReference>
<dbReference type="Pfam" id="PF00076">
    <property type="entry name" value="RRM_1"/>
    <property type="match status" value="4"/>
</dbReference>
<dbReference type="SMART" id="SM00517">
    <property type="entry name" value="PolyA"/>
    <property type="match status" value="1"/>
</dbReference>
<dbReference type="SMART" id="SM00360">
    <property type="entry name" value="RRM"/>
    <property type="match status" value="4"/>
</dbReference>
<dbReference type="SMART" id="SM00361">
    <property type="entry name" value="RRM_1"/>
    <property type="match status" value="3"/>
</dbReference>
<dbReference type="SUPFAM" id="SSF63570">
    <property type="entry name" value="PABC (PABP) domain"/>
    <property type="match status" value="1"/>
</dbReference>
<dbReference type="SUPFAM" id="SSF54928">
    <property type="entry name" value="RNA-binding domain, RBD"/>
    <property type="match status" value="2"/>
</dbReference>
<dbReference type="PROSITE" id="PS51309">
    <property type="entry name" value="PABC"/>
    <property type="match status" value="1"/>
</dbReference>
<dbReference type="PROSITE" id="PS50102">
    <property type="entry name" value="RRM"/>
    <property type="match status" value="4"/>
</dbReference>
<sequence>MNPSAPSYPMASLYVGDLHPDVTEAMLYEKFSPAGPILSIRVCRDMITRRSLGYAYVNFQQPADAERALDTMNFDVIKGKPVRIMWSQRDPSLRKSGVGNIFIKNLDKSIDNKALYDTFSAFGNILSCKVVCDENGSKGYGFVHFETQEAAERAIEKMNGMLLNDRKVFVGRFKSRKEREAELGARAKEFTNVYIKNFGEDMDDERLKDLFGKFGPALSVKVMTDESGKSKGFGFVSFERHEDAQKAVDEMNGKELNGKQIYVGRAQKKVERQTELKRKFEQMKQDRITRYQGVNLYVKNLDDGIDDERLRKEFSPFGTITSAKVMMEGGRSKGFGFVCFSSPEEATKAVTEMNGRIVATKPLYVALAQRKEERQAHLTNQYMQRMASVRAVPNPVINPYQPAPPSGYFMAAIPQTQNRAAYYPPSQIAQLRPSPRWTAQGARPHPFQNMPGAIRPAAPRPPFSTMRPASSQVPRVMSTQRVANTSTQTMGPRPAAAAAAATPAVRTVPQYKYAAGVRNPQQHLNAQPQVTMQQPAVHVQGQEPLTASMLASAPPQEQKQMLGERLFPLIQAMHPTLAGKITGMLLEIDNSELLHMLESPESLRSKVDEAVAVLQAHQAKEAAQKAVNSATGVPTV</sequence>
<organism>
    <name type="scientific">Homo sapiens</name>
    <name type="common">Human</name>
    <dbReference type="NCBI Taxonomy" id="9606"/>
    <lineage>
        <taxon>Eukaryota</taxon>
        <taxon>Metazoa</taxon>
        <taxon>Chordata</taxon>
        <taxon>Craniata</taxon>
        <taxon>Vertebrata</taxon>
        <taxon>Euteleostomi</taxon>
        <taxon>Mammalia</taxon>
        <taxon>Eutheria</taxon>
        <taxon>Euarchontoglires</taxon>
        <taxon>Primates</taxon>
        <taxon>Haplorrhini</taxon>
        <taxon>Catarrhini</taxon>
        <taxon>Hominidae</taxon>
        <taxon>Homo</taxon>
    </lineage>
</organism>
<reference key="1">
    <citation type="journal article" date="1987" name="Nucleic Acids Res.">
        <title>Human mRNA polyadenylate binding protein: evolutionary conservation of a nucleic acid binding motif.</title>
        <authorList>
            <person name="Grange T."/>
            <person name="de Sa C.M."/>
            <person name="Oddos J."/>
            <person name="Pictet R."/>
        </authorList>
    </citation>
    <scope>NUCLEOTIDE SEQUENCE [MRNA] (ISOFORM 1)</scope>
</reference>
<reference key="2">
    <citation type="submission" date="1996-09" db="EMBL/GenBank/DDBJ databases">
        <title>The human poly(A)-binding protein (PABP) gene: structural and functional analysis.</title>
        <authorList>
            <person name="Hornstein E."/>
            <person name="Abramzon-Talianker A."/>
            <person name="Wiesel I."/>
            <person name="Meyuhas O."/>
        </authorList>
    </citation>
    <scope>NUCLEOTIDE SEQUENCE [GENOMIC DNA]</scope>
    <source>
        <tissue>Lung</tissue>
    </source>
</reference>
<reference key="3">
    <citation type="journal article" date="2006" name="Nature">
        <title>DNA sequence and analysis of human chromosome 8.</title>
        <authorList>
            <person name="Nusbaum C."/>
            <person name="Mikkelsen T.S."/>
            <person name="Zody M.C."/>
            <person name="Asakawa S."/>
            <person name="Taudien S."/>
            <person name="Garber M."/>
            <person name="Kodira C.D."/>
            <person name="Schueler M.G."/>
            <person name="Shimizu A."/>
            <person name="Whittaker C.A."/>
            <person name="Chang J.L."/>
            <person name="Cuomo C.A."/>
            <person name="Dewar K."/>
            <person name="FitzGerald M.G."/>
            <person name="Yang X."/>
            <person name="Allen N.R."/>
            <person name="Anderson S."/>
            <person name="Asakawa T."/>
            <person name="Blechschmidt K."/>
            <person name="Bloom T."/>
            <person name="Borowsky M.L."/>
            <person name="Butler J."/>
            <person name="Cook A."/>
            <person name="Corum B."/>
            <person name="DeArellano K."/>
            <person name="DeCaprio D."/>
            <person name="Dooley K.T."/>
            <person name="Dorris L. III"/>
            <person name="Engels R."/>
            <person name="Gloeckner G."/>
            <person name="Hafez N."/>
            <person name="Hagopian D.S."/>
            <person name="Hall J.L."/>
            <person name="Ishikawa S.K."/>
            <person name="Jaffe D.B."/>
            <person name="Kamat A."/>
            <person name="Kudoh J."/>
            <person name="Lehmann R."/>
            <person name="Lokitsang T."/>
            <person name="Macdonald P."/>
            <person name="Major J.E."/>
            <person name="Matthews C.D."/>
            <person name="Mauceli E."/>
            <person name="Menzel U."/>
            <person name="Mihalev A.H."/>
            <person name="Minoshima S."/>
            <person name="Murayama Y."/>
            <person name="Naylor J.W."/>
            <person name="Nicol R."/>
            <person name="Nguyen C."/>
            <person name="O'Leary S.B."/>
            <person name="O'Neill K."/>
            <person name="Parker S.C.J."/>
            <person name="Polley A."/>
            <person name="Raymond C.K."/>
            <person name="Reichwald K."/>
            <person name="Rodriguez J."/>
            <person name="Sasaki T."/>
            <person name="Schilhabel M."/>
            <person name="Siddiqui R."/>
            <person name="Smith C.L."/>
            <person name="Sneddon T.P."/>
            <person name="Talamas J.A."/>
            <person name="Tenzin P."/>
            <person name="Topham K."/>
            <person name="Venkataraman V."/>
            <person name="Wen G."/>
            <person name="Yamazaki S."/>
            <person name="Young S.K."/>
            <person name="Zeng Q."/>
            <person name="Zimmer A.R."/>
            <person name="Rosenthal A."/>
            <person name="Birren B.W."/>
            <person name="Platzer M."/>
            <person name="Shimizu N."/>
            <person name="Lander E.S."/>
        </authorList>
    </citation>
    <scope>NUCLEOTIDE SEQUENCE [LARGE SCALE GENOMIC DNA]</scope>
</reference>
<reference key="4">
    <citation type="journal article" date="2004" name="Genome Res.">
        <title>The status, quality, and expansion of the NIH full-length cDNA project: the Mammalian Gene Collection (MGC).</title>
        <authorList>
            <consortium name="The MGC Project Team"/>
        </authorList>
    </citation>
    <scope>NUCLEOTIDE SEQUENCE [LARGE SCALE MRNA] (ISOFORM 1)</scope>
    <source>
        <tissue>Lung</tissue>
        <tissue>Muscle</tissue>
    </source>
</reference>
<reference key="5">
    <citation type="submission" date="1995-02" db="EMBL/GenBank/DDBJ databases">
        <title>Nucleotide sequence of a partial cDNA encoding a novel human polyadenylate-binding protein.</title>
        <authorList>
            <person name="Murphy E.P."/>
            <person name="McKenna N.J."/>
            <person name="Headon D.R."/>
        </authorList>
    </citation>
    <scope>NUCLEOTIDE SEQUENCE [MRNA] OF 26-636 (ISOFORM 2)</scope>
</reference>
<reference key="6">
    <citation type="submission" date="2008-12" db="UniProtKB">
        <authorList>
            <person name="Bienvenut W.V."/>
            <person name="Zebisch A."/>
            <person name="Lilla S."/>
            <person name="von Kriegsheim A."/>
            <person name="Lempens A."/>
            <person name="Kolch W."/>
        </authorList>
    </citation>
    <scope>PROTEIN SEQUENCE OF 31-41; 51-78; 84-89; 96-104; 158-166; 189-196; 214-221; 232-240; 291-309; 312-324; 357-370; 375-385; 482-506; 566-580 AND 605-620</scope>
    <scope>METHYLATION AT ARG-493</scope>
    <scope>IDENTIFICATION BY MASS SPECTROMETRY</scope>
    <source>
        <tissue>Colon carcinoma</tissue>
        <tissue>Ovarian carcinoma</tissue>
    </source>
</reference>
<reference key="7">
    <citation type="submission" date="2009-03" db="UniProtKB">
        <authorList>
            <person name="Bienvenut W.V."/>
            <person name="Waridel P."/>
            <person name="Quadroni M."/>
        </authorList>
    </citation>
    <scope>PROTEIN SEQUENCE OF 31-41; 51-78; 84-89; 96-104; 114-129; 139-153; 158-166; 187-208; 214-221; 232-240; 291-324; 334-348; 357-370; 375-385; 482-506; 519-559; 566-620 AND 626-636</scope>
    <scope>METHYLATION AT LYS-299 AND ARG-493</scope>
    <scope>IDENTIFICATION BY MASS SPECTROMETRY</scope>
    <source>
        <tissue>Cervix carcinoma</tissue>
    </source>
</reference>
<reference key="8">
    <citation type="journal article" date="1994" name="Exp. Cell Res.">
        <title>The mRNA poly(A)-binding protein: localization, abundance, and RNA-binding specificity.</title>
        <authorList>
            <person name="Goerlach M."/>
            <person name="Burd C.G."/>
            <person name="Dreyfuss G."/>
        </authorList>
    </citation>
    <scope>PARTIAL NUCLEOTIDE SEQUENCE [MRNA]</scope>
    <scope>SUBCELLULAR LOCATION</scope>
</reference>
<reference key="9">
    <citation type="journal article" date="1998" name="J. Biol. Chem.">
        <title>The human poly(A)-binding protein 1 shuttles between the nucleus and the cytoplasm.</title>
        <authorList>
            <person name="Afonina E."/>
            <person name="Stauber R."/>
            <person name="Pavlakis G.N."/>
        </authorList>
    </citation>
    <scope>SUBCELLULAR LOCATION</scope>
</reference>
<reference key="10">
    <citation type="journal article" date="1998" name="Nature">
        <title>Interaction of polyadenylate-binding protein with the eIF4G homologue PAIP enhances translation.</title>
        <authorList>
            <person name="Craig A.W.B."/>
            <person name="Haghighat A."/>
            <person name="Yu A.T.K."/>
            <person name="Sonenberg N."/>
        </authorList>
    </citation>
    <scope>INTERACTION WITH PAIP1</scope>
    <scope>DOMAIN</scope>
</reference>
<reference key="11">
    <citation type="journal article" date="2000" name="Cell">
        <title>A mechanism for translationally coupled mRNA turnover: interaction between the poly(A) tail and a c-fos RNA coding determinant via a protein complex.</title>
        <authorList>
            <person name="Grosset C."/>
            <person name="Chen C.-Y.A."/>
            <person name="Xu N."/>
            <person name="Sonenberg N."/>
            <person name="Jacquemin-Sablon H."/>
            <person name="Shyu A.-B."/>
        </authorList>
    </citation>
    <scope>FUNCTION IN TRANSLATIONALLY COUPLED MRNA TURNOVER</scope>
    <scope>IDENTIFICATION IN A COMPLEX WITH HNRPD; SYNCRIP; PAIP1 AND CSDE1</scope>
</reference>
<reference key="12">
    <citation type="journal article" date="2001" name="Mol. Cell">
        <title>Translational repression by a novel partner of human poly(A) binding protein, Paip2.</title>
        <authorList>
            <person name="Khaleghpour K."/>
            <person name="Svitkin Y.V."/>
            <person name="Craig A.W.B."/>
            <person name="DeMaria C.T."/>
            <person name="Deo R.C."/>
            <person name="Burley S.K."/>
            <person name="Sonenberg N."/>
        </authorList>
    </citation>
    <scope>INTERACTION WITH PAIP2</scope>
</reference>
<reference key="13">
    <citation type="journal article" date="2001" name="Mol. Cell. Biol.">
        <title>Dual interactions of the translational repressor Paip2 with poly(A) binding protein.</title>
        <authorList>
            <person name="Khaleghpour K."/>
            <person name="Kahvejian A."/>
            <person name="De Crescenzo G."/>
            <person name="Roy G."/>
            <person name="Svitkin Y.V."/>
            <person name="Imataka H."/>
            <person name="O'Connor-McCourt M."/>
            <person name="Sonenberg N."/>
        </authorList>
    </citation>
    <scope>INTERACTION WITH PAIP2</scope>
</reference>
<reference key="14">
    <citation type="journal article" date="2002" name="EMBO Rep.">
        <title>PABP1 identified as an arginine methyltransferase substrate using high-density protein arrays.</title>
        <authorList>
            <person name="Lee J."/>
            <person name="Bedford M.T."/>
        </authorList>
    </citation>
    <scope>METHYLATION AT ARG-455 AND ARG-460</scope>
    <scope>MUTAGENESIS OF ARG-455 AND ARG-460</scope>
</reference>
<reference key="15">
    <citation type="journal article" date="2002" name="Mol. Cell. Biol.">
        <title>Paip1 interacts with poly(A) binding protein through two independent binding motifs.</title>
        <authorList>
            <person name="Roy G."/>
            <person name="De Crescenzo G."/>
            <person name="Khaleghpour K."/>
            <person name="Kahvejian A."/>
            <person name="O'Connor-McCourt M."/>
            <person name="Sonenberg N."/>
        </authorList>
    </citation>
    <scope>INTERACTION WITH PAIP1</scope>
</reference>
<reference key="16">
    <citation type="journal article" date="2002" name="RNA">
        <title>Purification and characterization of native spliceosomes suitable for three-dimensional structural analysis.</title>
        <authorList>
            <person name="Jurica M.S."/>
            <person name="Licklider L.J."/>
            <person name="Gygi S.P."/>
            <person name="Grigorieff N."/>
            <person name="Moore M.J."/>
        </authorList>
    </citation>
    <scope>IDENTIFICATION BY MASS SPECTROMETRY</scope>
    <scope>IDENTIFICATION IN THE SPLICEOSOMAL C COMPLEX</scope>
</reference>
<reference key="17">
    <citation type="journal article" date="2003" name="Biochem. Biophys. Res. Commun.">
        <title>Affinity purification of ARE-binding proteins identifies polyA-binding protein 1 as a potential substrate in MK2-induced mRNA stabilization.</title>
        <authorList>
            <person name="Bollig F."/>
            <person name="Winzen R."/>
            <person name="Gaestel M."/>
            <person name="Kostka S."/>
            <person name="Resch K."/>
            <person name="Holtmann H."/>
        </authorList>
    </citation>
    <scope>PHOSPHORYLATION BY MAPKAPK2</scope>
</reference>
<reference key="18">
    <citation type="journal article" date="2003" name="Nature">
        <title>Proteomic characterization of the human centrosome by protein correlation profiling.</title>
        <authorList>
            <person name="Andersen J.S."/>
            <person name="Wilkinson C.J."/>
            <person name="Mayor T."/>
            <person name="Mortensen P."/>
            <person name="Nigg E.A."/>
            <person name="Mann M."/>
        </authorList>
    </citation>
    <scope>IDENTIFICATION BY MASS SPECTROMETRY</scope>
    <source>
        <tissue>Lymphoblast</tissue>
    </source>
</reference>
<reference key="19">
    <citation type="journal article" date="2004" name="Genes Dev.">
        <title>UNR, a new partner of poly(A)-binding protein, plays a key role in translationally coupled mRNA turnover mediated by the c-fos major coding-region determinant.</title>
        <authorList>
            <person name="Chang T.-C."/>
            <person name="Yamashita A."/>
            <person name="Chen C.-Y.A."/>
            <person name="Yamashita Y."/>
            <person name="Zhu W."/>
            <person name="Durdan S."/>
            <person name="Kahvejian A."/>
            <person name="Sonenberg N."/>
            <person name="Shyu A.-B."/>
        </authorList>
    </citation>
    <scope>INTERACTION WITH CSDE1</scope>
</reference>
<reference key="20">
    <citation type="journal article" date="2005" name="Nucleic Acids Res.">
        <title>The autoregulatory translational control element of poly(A)-binding protein mRNA forms a heteromeric ribonucleoprotein complex.</title>
        <authorList>
            <person name="Patel G.P."/>
            <person name="Ma S."/>
            <person name="Bag J."/>
        </authorList>
    </citation>
    <scope>IDENTIFICATION IN A MRNP COMPLEX WITH IGF2BP1 AND CSDE1</scope>
</reference>
<reference key="21">
    <citation type="journal article" date="2006" name="FEBS J.">
        <title>IMP1 interacts with poly(A)-binding protein (PABP) and the autoregulatory translational control element of PABP-mRNA through the KH III-IV domain.</title>
        <authorList>
            <person name="Patel G.P."/>
            <person name="Bag J."/>
        </authorList>
    </citation>
    <scope>FUNCTION</scope>
    <scope>HOMODIMERIZATION</scope>
    <scope>INTERACTION WITH IGF2BP1</scope>
    <scope>RNA-BINDING</scope>
</reference>
<reference key="22">
    <citation type="journal article" date="2006" name="RNA">
        <title>Regulation of poly(A) binding protein function in translation: Characterization of the Paip2 homolog, Paip2B.</title>
        <authorList>
            <person name="Berlanga J.J."/>
            <person name="Baass A."/>
            <person name="Sonenberg N."/>
        </authorList>
    </citation>
    <scope>INTERACTION WITH PAIP2B</scope>
</reference>
<reference key="23">
    <citation type="journal article" date="2007" name="EMBO Rep.">
        <title>Proteomic and functional analysis of Argonaute-containing mRNA-protein complexes in human cells.</title>
        <authorList>
            <person name="Hoeck J."/>
            <person name="Weinmann L."/>
            <person name="Ender C."/>
            <person name="Ruedel S."/>
            <person name="Kremmer E."/>
            <person name="Raabe M."/>
            <person name="Urlaub H."/>
            <person name="Meister G."/>
        </authorList>
    </citation>
    <scope>INTERACTION WITH AGO1 AND AGO2</scope>
</reference>
<reference key="24">
    <citation type="journal article" date="2007" name="J. Virol.">
        <title>NFX1-123 and poly(A) binding proteins synergistically augment activation of telomerase in human papillomavirus type 16 E6-expressing cells.</title>
        <authorList>
            <person name="Katzenellenbogen R.A."/>
            <person name="Egelkrout E.M."/>
            <person name="Vliet-Gregg P."/>
            <person name="Gewin L.C."/>
            <person name="Gafken P.R."/>
            <person name="Galloway D.A."/>
        </authorList>
    </citation>
    <scope>INTERACTION WITH NFX1</scope>
</reference>
<reference key="25">
    <citation type="journal article" date="2007" name="Mol. Cell. Proteomics">
        <title>Molecular composition of IMP1 ribonucleoprotein granules.</title>
        <authorList>
            <person name="Joeson L."/>
            <person name="Vikesaa J."/>
            <person name="Krogh A."/>
            <person name="Nielsen L.K."/>
            <person name="Hansen T."/>
            <person name="Borup R."/>
            <person name="Johnsen A.H."/>
            <person name="Christiansen J."/>
            <person name="Nielsen F.C."/>
        </authorList>
    </citation>
    <scope>IDENTIFICATION IN A MRNP GRANULE COMPLEX</scope>
    <scope>INTERACTION WITH IGF2BP1</scope>
    <scope>SUBCELLULAR LOCATION</scope>
</reference>
<reference key="26">
    <citation type="journal article" date="2008" name="J. Virol.">
        <title>Nuclear localization of cytoplasmic poly(A)-binding protein upon rotavirus infection involves the interaction of NSP3 with eIF4G and RoXaN.</title>
        <authorList>
            <person name="Harb M."/>
            <person name="Becker M.M."/>
            <person name="Vitour D."/>
            <person name="Baron C.H."/>
            <person name="Vende P."/>
            <person name="Brown S.C."/>
            <person name="Bolte S."/>
            <person name="Arold S.T."/>
            <person name="Poncet D."/>
        </authorList>
    </citation>
    <scope>SUBCELLULAR LOCATION</scope>
</reference>
<reference key="27">
    <citation type="journal article" date="2008" name="Mol. Biol. Cell">
        <title>The DEAD-box RNA helicase DDX3 associates with export messenger ribonucleoproteins as well as tip-associated protein and participates in translational control.</title>
        <authorList>
            <person name="Lai M.C."/>
            <person name="Lee Y.H."/>
            <person name="Tarn W.Y."/>
        </authorList>
    </citation>
    <scope>INTERACTION WITH DDX3X AND NXF1</scope>
    <scope>SUBCELLULAR LOCATION</scope>
</reference>
<reference key="28">
    <citation type="journal article" date="2008" name="PLoS Biol.">
        <title>A competition between stimulators and antagonists of Upf complex recruitment governs human nonsense-mediated mRNA decay.</title>
        <authorList>
            <person name="Singh G."/>
            <person name="Rebbapragada I."/>
            <person name="Lykke-Andersen J."/>
        </authorList>
    </citation>
    <scope>FUNCTION IN NONSENSE-MEDIATED MRNA DECAY</scope>
    <scope>INTERACTION WITH GSPT2</scope>
</reference>
<reference key="29">
    <citation type="journal article" date="2008" name="Proc. Natl. Acad. Sci. U.S.A.">
        <title>A quantitative atlas of mitotic phosphorylation.</title>
        <authorList>
            <person name="Dephoure N."/>
            <person name="Zhou C."/>
            <person name="Villen J."/>
            <person name="Beausoleil S.A."/>
            <person name="Bakalarski C.E."/>
            <person name="Elledge S.J."/>
            <person name="Gygi S.P."/>
        </authorList>
    </citation>
    <scope>PHOSPHORYLATION [LARGE SCALE ANALYSIS] AT SER-315</scope>
    <scope>IDENTIFICATION BY MASS SPECTROMETRY [LARGE SCALE ANALYSIS]</scope>
    <source>
        <tissue>Cervix carcinoma</tissue>
    </source>
</reference>
<reference key="30">
    <citation type="journal article" date="2009" name="Anal. Chem.">
        <title>Lys-N and trypsin cover complementary parts of the phosphoproteome in a refined SCX-based approach.</title>
        <authorList>
            <person name="Gauci S."/>
            <person name="Helbig A.O."/>
            <person name="Slijper M."/>
            <person name="Krijgsveld J."/>
            <person name="Heck A.J."/>
            <person name="Mohammed S."/>
        </authorList>
    </citation>
    <scope>ACETYLATION [LARGE SCALE ANALYSIS] AT MET-1</scope>
    <scope>IDENTIFICATION BY MASS SPECTROMETRY [LARGE SCALE ANALYSIS]</scope>
</reference>
<reference key="31">
    <citation type="journal article" date="2009" name="RNA">
        <title>Control of c-myc mRNA stability by IGF2BP1-associated cytoplasmic RNPs.</title>
        <authorList>
            <person name="Weidensdorfer D."/>
            <person name="Stoehr N."/>
            <person name="Baude A."/>
            <person name="Lederer M."/>
            <person name="Koehn M."/>
            <person name="Schierhorn A."/>
            <person name="Buchmeier S."/>
            <person name="Wahle E."/>
            <person name="Huettelmaiery S."/>
        </authorList>
    </citation>
    <scope>IDENTIFICATION IN A MRNP COMPLEX</scope>
    <scope>IDENTIFICATION BY MASS SPECTROMETRY</scope>
</reference>
<reference key="32">
    <citation type="journal article" date="2009" name="Science">
        <title>Lysine acetylation targets protein complexes and co-regulates major cellular functions.</title>
        <authorList>
            <person name="Choudhary C."/>
            <person name="Kumar C."/>
            <person name="Gnad F."/>
            <person name="Nielsen M.L."/>
            <person name="Rehman M."/>
            <person name="Walther T.C."/>
            <person name="Olsen J.V."/>
            <person name="Mann M."/>
        </authorList>
    </citation>
    <scope>ACETYLATION [LARGE SCALE ANALYSIS] AT LYS-512</scope>
    <scope>IDENTIFICATION BY MASS SPECTROMETRY [LARGE SCALE ANALYSIS]</scope>
</reference>
<reference key="33">
    <citation type="journal article" date="2010" name="Biochem. J.">
        <title>Poly(A)-binding protein (PABP): a common viral target.</title>
        <authorList>
            <person name="Smith R.W."/>
            <person name="Gray N.K."/>
        </authorList>
    </citation>
    <scope>REVIEW</scope>
</reference>
<reference key="34">
    <citation type="journal article" date="2010" name="Nucleic Acids Res.">
        <title>The RNA binding protein Larp1 regulates cell division, apoptosis and cell migration.</title>
        <authorList>
            <person name="Burrows C."/>
            <person name="Abd Latip N."/>
            <person name="Lam S.J."/>
            <person name="Carpenter L."/>
            <person name="Sawicka K."/>
            <person name="Tzolovsky G."/>
            <person name="Gabra H."/>
            <person name="Bushell M."/>
            <person name="Glover D.M."/>
            <person name="Willis A.E."/>
            <person name="Blagden S.P."/>
        </authorList>
    </citation>
    <scope>INTERACTION WITH LARP1</scope>
</reference>
<reference key="35">
    <citation type="journal article" date="2010" name="Proc. Natl. Acad. Sci. U.S.A.">
        <title>Human cytomegalovirus UL69 protein facilitates translation by associating with the mRNA cap-binding complex and excluding 4EBP1.</title>
        <authorList>
            <person name="Aoyagi M."/>
            <person name="Gaspar M."/>
            <person name="Shenk T.E."/>
        </authorList>
    </citation>
    <scope>INTERACTION WITH HHV-5 PROTEIN UL69</scope>
</reference>
<reference key="36">
    <citation type="journal article" date="2010" name="RNA">
        <title>A stimulatory role for the La-related protein 4B in translation.</title>
        <authorList>
            <person name="Schaffler K."/>
            <person name="Schulz K."/>
            <person name="Hirmer A."/>
            <person name="Wiesner J."/>
            <person name="Grimm M."/>
            <person name="Sickmann A."/>
            <person name="Fischer U."/>
        </authorList>
    </citation>
    <scope>FUNCTION</scope>
    <scope>SUBCELLULAR LOCATION</scope>
    <scope>INTERACTION WITH PABPC1 AND RACK1</scope>
</reference>
<reference key="37">
    <citation type="journal article" date="2010" name="Sci. Signal.">
        <title>Quantitative phosphoproteomics reveals widespread full phosphorylation site occupancy during mitosis.</title>
        <authorList>
            <person name="Olsen J.V."/>
            <person name="Vermeulen M."/>
            <person name="Santamaria A."/>
            <person name="Kumar C."/>
            <person name="Miller M.L."/>
            <person name="Jensen L.J."/>
            <person name="Gnad F."/>
            <person name="Cox J."/>
            <person name="Jensen T.S."/>
            <person name="Nigg E.A."/>
            <person name="Brunak S."/>
            <person name="Mann M."/>
        </authorList>
    </citation>
    <scope>PHOSPHORYLATION [LARGE SCALE ANALYSIS] AT SER-315</scope>
    <scope>IDENTIFICATION BY MASS SPECTROMETRY [LARGE SCALE ANALYSIS]</scope>
    <source>
        <tissue>Cervix carcinoma</tissue>
    </source>
</reference>
<reference key="38">
    <citation type="journal article" date="2011" name="BMC Syst. Biol.">
        <title>Initial characterization of the human central proteome.</title>
        <authorList>
            <person name="Burkard T.R."/>
            <person name="Planyavsky M."/>
            <person name="Kaupe I."/>
            <person name="Breitwieser F.P."/>
            <person name="Buerckstuemmer T."/>
            <person name="Bennett K.L."/>
            <person name="Superti-Furga G."/>
            <person name="Colinge J."/>
        </authorList>
    </citation>
    <scope>IDENTIFICATION BY MASS SPECTROMETRY [LARGE SCALE ANALYSIS]</scope>
</reference>
<reference key="39">
    <citation type="journal article" date="2011" name="Mol. Cell">
        <title>Human senataxin resolves RNA/DNA hybrids formed at transcriptional pause sites to promote Xrn2-dependent termination.</title>
        <authorList>
            <person name="Skourti-Stathaki K."/>
            <person name="Proudfoot N.J."/>
            <person name="Gromak N."/>
        </authorList>
    </citation>
    <scope>INTERACTION WITH SETX</scope>
</reference>
<reference key="40">
    <citation type="journal article" date="2012" name="Biochem. J.">
        <title>Critical roles of RNA helicase DDX3 and its interactions with eIF4E/PABP1 in stress granule assembly and stress response.</title>
        <authorList>
            <person name="Shih J.W."/>
            <person name="Wang W.T."/>
            <person name="Tsai T.Y."/>
            <person name="Kuo C.Y."/>
            <person name="Li H.K."/>
            <person name="Wu Lee Y.H."/>
        </authorList>
    </citation>
    <scope>INTERACTION WITH DDX3X</scope>
    <scope>SUBCELLULAR LOCATION</scope>
</reference>
<reference key="41">
    <citation type="journal article" date="2012" name="EMBO J.">
        <title>DEAD-box protein DDX3 associates with eIF4F to promote translation of selected mRNAs.</title>
        <authorList>
            <person name="Soto-Rifo R."/>
            <person name="Rubilar P.S."/>
            <person name="Limousin T."/>
            <person name="de Breyne S."/>
            <person name="Decimo D."/>
            <person name="Ohlmann T."/>
        </authorList>
    </citation>
    <scope>INTERACTION WITH DDX3X</scope>
    <scope>SUBCELLULAR LOCATION</scope>
</reference>
<reference key="42">
    <citation type="journal article" date="2013" name="J. Proteome Res.">
        <title>Toward a comprehensive characterization of a human cancer cell phosphoproteome.</title>
        <authorList>
            <person name="Zhou H."/>
            <person name="Di Palma S."/>
            <person name="Preisinger C."/>
            <person name="Peng M."/>
            <person name="Polat A.N."/>
            <person name="Heck A.J."/>
            <person name="Mohammed S."/>
        </authorList>
    </citation>
    <scope>PHOSPHORYLATION [LARGE SCALE ANALYSIS] AT SER-315 AND THR-319</scope>
    <scope>IDENTIFICATION BY MASS SPECTROMETRY [LARGE SCALE ANALYSIS]</scope>
    <source>
        <tissue>Cervix carcinoma</tissue>
        <tissue>Erythroleukemia</tissue>
    </source>
</reference>
<reference key="43">
    <citation type="journal article" date="2013" name="Nucleic Acids Res.">
        <title>The mammalian TRIM-NHL protein TRIM71/LIN-41 is a repressor of mRNA function.</title>
        <authorList>
            <person name="Loedige I."/>
            <person name="Gaidatzis D."/>
            <person name="Sack R."/>
            <person name="Meister G."/>
            <person name="Filipowicz W."/>
        </authorList>
    </citation>
    <scope>INTERACTION WITH TRIM71</scope>
</reference>
<reference key="44">
    <citation type="journal article" date="2013" name="Genes Cells">
        <title>Both G3BP1 and G3BP2 contribute to stress granule formation.</title>
        <authorList>
            <person name="Matsuki H."/>
            <person name="Takahashi M."/>
            <person name="Higuchi M."/>
            <person name="Makokha G.N."/>
            <person name="Oie M."/>
            <person name="Fujii M."/>
        </authorList>
    </citation>
    <scope>INTERACTION WITH G3BP1 AND G3BP2</scope>
</reference>
<reference key="45">
    <citation type="journal article" date="2013" name="J. Virol.">
        <title>Interplay between polyadenylate-binding protein 1 and Kaposi's sarcoma-associated herpesvirus ORF57 in accumulation of polyadenylated nuclear RNA, a viral long noncoding RNA.</title>
        <authorList>
            <person name="Massimelli M.J."/>
            <person name="Majerciak V."/>
            <person name="Kruhlak M."/>
            <person name="Zheng Z.M."/>
        </authorList>
    </citation>
    <scope>INTERACTION WITH HUMAN HERPESVIRUS 8 PROTEIN MTA/ORF57 (MICROBIAL INFECTION)</scope>
    <scope>FUNCTION</scope>
    <scope>SUBCELLULAR LOCATION</scope>
</reference>
<reference key="46">
    <citation type="journal article" date="2014" name="Cell Rep.">
        <title>The RNA helicase DHX34 activates NMD by promoting a transition from the surveillance to the decay-inducing complex.</title>
        <authorList>
            <person name="Hug N."/>
            <person name="Caceres J.F."/>
        </authorList>
    </citation>
    <scope>INTERACTION WITH URF1</scope>
</reference>
<reference key="47">
    <citation type="journal article" date="2014" name="Cell">
        <title>Uridylation by TUT4 and TUT7 marks mRNA for degradation.</title>
        <authorList>
            <person name="Lim J."/>
            <person name="Ha M."/>
            <person name="Chang H."/>
            <person name="Kwon S.C."/>
            <person name="Simanshu D.K."/>
            <person name="Patel D.J."/>
            <person name="Kim V.N."/>
        </authorList>
    </citation>
    <scope>FUNCTION</scope>
</reference>
<reference key="48">
    <citation type="journal article" date="2014" name="Genes Dev.">
        <title>Proteomic analysis of cap-dependent translation identifies LARP1 as a key regulator of 5'TOP mRNA translation.</title>
        <authorList>
            <person name="Tcherkezian J."/>
            <person name="Cargnello M."/>
            <person name="Romeo Y."/>
            <person name="Huttlin E.L."/>
            <person name="Lavoie G."/>
            <person name="Gygi S.P."/>
            <person name="Roux P.P."/>
        </authorList>
    </citation>
    <scope>INTERACTION WITH LARP1</scope>
</reference>
<reference key="49">
    <citation type="journal article" date="2014" name="Mol. Cell. Proteomics">
        <title>Immunoaffinity enrichment and mass spectrometry analysis of protein methylation.</title>
        <authorList>
            <person name="Guo A."/>
            <person name="Gu H."/>
            <person name="Zhou J."/>
            <person name="Mulhern D."/>
            <person name="Wang Y."/>
            <person name="Lee K.A."/>
            <person name="Yang V."/>
            <person name="Aguiar M."/>
            <person name="Kornhauser J."/>
            <person name="Jia X."/>
            <person name="Ren J."/>
            <person name="Beausoleil S.A."/>
            <person name="Silva J.C."/>
            <person name="Vemulapalli V."/>
            <person name="Bedford M.T."/>
            <person name="Comb M.J."/>
        </authorList>
    </citation>
    <scope>METHYLATION [LARGE SCALE ANALYSIS] AT ARG-385; ARG-419; ARG-432; ARG-436; ARG-481; ARG-493; ARG-506 AND ARG-518</scope>
    <scope>IDENTIFICATION BY MASS SPECTROMETRY [LARGE SCALE ANALYSIS]</scope>
    <source>
        <tissue>Colon carcinoma</tissue>
    </source>
</reference>
<reference key="50">
    <citation type="journal article" date="2015" name="J. Biol. Chem.">
        <title>La-related protein 1 (LARP1) represses terminal oligopyrimidine (TOP) mRNA translation downstream of mTOR complex 1 (mTORC1).</title>
        <authorList>
            <person name="Fonseca B.D."/>
            <person name="Zakaria C."/>
            <person name="Jia J.J."/>
            <person name="Graber T.E."/>
            <person name="Svitkin Y."/>
            <person name="Tahmasebi S."/>
            <person name="Healy D."/>
            <person name="Hoang H.D."/>
            <person name="Jensen J.M."/>
            <person name="Diao I.T."/>
            <person name="Lussier A."/>
            <person name="Dajadian C."/>
            <person name="Padmanabhan N."/>
            <person name="Wang W."/>
            <person name="Matta-Camacho E."/>
            <person name="Hearnden J."/>
            <person name="Smith E.M."/>
            <person name="Tsukumo Y."/>
            <person name="Yanagiya A."/>
            <person name="Morita M."/>
            <person name="Petroulakis E."/>
            <person name="Gonzalez J.L."/>
            <person name="Hernandez G."/>
            <person name="Alain T."/>
            <person name="Damgaard C.K."/>
        </authorList>
    </citation>
    <scope>INTERACTION WITH LARP1</scope>
</reference>
<reference key="51">
    <citation type="journal article" date="2015" name="Proteomics">
        <title>N-terminome analysis of the human mitochondrial proteome.</title>
        <authorList>
            <person name="Vaca Jacome A.S."/>
            <person name="Rabilloud T."/>
            <person name="Schaeffer-Reiss C."/>
            <person name="Rompais M."/>
            <person name="Ayoub D."/>
            <person name="Lane L."/>
            <person name="Bairoch A."/>
            <person name="Van Dorsselaer A."/>
            <person name="Carapito C."/>
        </authorList>
    </citation>
    <scope>IDENTIFICATION BY MASS SPECTROMETRY [LARGE SCALE ANALYSIS]</scope>
</reference>
<reference key="52">
    <citation type="journal article" date="2016" name="J. Biol. Chem.">
        <title>Regulation of Human Endonuclease V Activity and Relocalization to Cytoplasmic Stress Granules.</title>
        <authorList>
            <person name="Nawaz M.S."/>
            <person name="Vik E.S."/>
            <person name="Berges N."/>
            <person name="Fladeby C."/>
            <person name="Bjoeraas M."/>
            <person name="Dalhus B."/>
            <person name="Alseth I."/>
        </authorList>
    </citation>
    <scope>INTERACTION WITH ENDOV</scope>
    <scope>SUBCELLULAR LOCATION</scope>
</reference>
<reference key="53">
    <citation type="journal article" date="2016" name="Mol. Cell">
        <title>Identification of a nuclear exosome decay pathway for processed transcripts.</title>
        <authorList>
            <person name="Meola N."/>
            <person name="Domanski M."/>
            <person name="Karadoulama E."/>
            <person name="Chen Y."/>
            <person name="Gentil C."/>
            <person name="Pultz D."/>
            <person name="Vitting-Seerup K."/>
            <person name="Lykke-Andersen S."/>
            <person name="Andersen J.S."/>
            <person name="Sandelin A."/>
            <person name="Jensen T.H."/>
        </authorList>
    </citation>
    <scope>INTERACTION WITH ZFC3H1</scope>
</reference>
<reference key="54">
    <citation type="journal article" date="2016" name="PLoS Pathog.">
        <title>Characterization of RyDEN (C19orf66) as an interferon-stimulated cellular inhibitor against dengue virus replication.</title>
        <authorList>
            <person name="Suzuki Y."/>
            <person name="Chin W.X."/>
            <person name="Han Q."/>
            <person name="Ichiyama K."/>
            <person name="Lee C.H."/>
            <person name="Eyo Z.W."/>
            <person name="Ebina H."/>
            <person name="Takahashi H."/>
            <person name="Takahashi C."/>
            <person name="Tan B.H."/>
            <person name="Hishiki T."/>
            <person name="Ohba K."/>
            <person name="Matsuyama T."/>
            <person name="Koyanagi Y."/>
            <person name="Tan Y.J."/>
            <person name="Sawasaki T."/>
            <person name="Chu J.J."/>
            <person name="Vasudevan S.G."/>
            <person name="Sano K."/>
            <person name="Yamamoto N."/>
        </authorList>
    </citation>
    <scope>IDENTIFICATION BY MASS SPECTROMETRY</scope>
    <scope>FUNCTION (MICROBIAL INFECTION)</scope>
    <scope>INTERACTION WITH SHFL</scope>
    <scope>IDENTIFICATION IN A COMPLEX WITH SHFL AND LARP1</scope>
</reference>
<reference key="55">
    <citation type="journal article" date="2017" name="Biochem. J.">
        <title>The helicase, DDX3X, interacts with poly(A)-binding protein 1 (PABP1) and caprin-1 at the leading edge of migrating fibroblasts and is required for efficient cell spreading.</title>
        <authorList>
            <person name="Copsey A.C."/>
            <person name="Cooper S."/>
            <person name="Parker R."/>
            <person name="Lineham E."/>
            <person name="Lapworth C."/>
            <person name="Jallad D."/>
            <person name="Sweet S."/>
            <person name="Morley S.J."/>
        </authorList>
    </citation>
    <scope>INTERACTION WITH DDX3X</scope>
    <scope>SUBCELLULAR LOCATION</scope>
</reference>
<reference key="56">
    <citation type="journal article" date="2017" name="Nat. Commun.">
        <title>The non-canonical poly(A) polymerase FAM46C acts as an onco-suppressor in multiple myeloma.</title>
        <authorList>
            <person name="Mroczek S."/>
            <person name="Chlebowska J."/>
            <person name="Kulinski T.M."/>
            <person name="Gewartowska O."/>
            <person name="Gruchota J."/>
            <person name="Cysewski D."/>
            <person name="Liudkovska V."/>
            <person name="Borsuk E."/>
            <person name="Nowis D."/>
            <person name="Dziembowski A."/>
        </authorList>
    </citation>
    <scope>INTERACTION WITH TENT5C</scope>
</reference>
<reference key="57">
    <citation type="journal article" date="2017" name="RNA">
        <title>Antagonistic actions of two human Pan3 isoforms on global mRNA turnover.</title>
        <authorList>
            <person name="Chen C.A."/>
            <person name="Zhang Y."/>
            <person name="Xiang Y."/>
            <person name="Han L."/>
            <person name="Chang J.T."/>
            <person name="Shyu A.B."/>
        </authorList>
    </citation>
    <scope>INTERACTION WITH PAN3</scope>
</reference>
<reference key="58">
    <citation type="journal article" date="2018" name="Nat. Cell Biol.">
        <title>Recognition of RNA N6-methyladenosine by IGF2BP proteins enhances mRNA stability and translation.</title>
        <authorList>
            <person name="Huang H."/>
            <person name="Weng H."/>
            <person name="Sun W."/>
            <person name="Qin X."/>
            <person name="Shi H."/>
            <person name="Wu H."/>
            <person name="Zhao B.S."/>
            <person name="Mesquita A."/>
            <person name="Liu C."/>
            <person name="Yuan C.L."/>
            <person name="Hu Y.C."/>
            <person name="Huettelmaier S."/>
            <person name="Skibbe J.R."/>
            <person name="Su R."/>
            <person name="Deng X."/>
            <person name="Dong L."/>
            <person name="Sun M."/>
            <person name="Li C."/>
            <person name="Nachtergaele S."/>
            <person name="Wang Y."/>
            <person name="Hu C."/>
            <person name="Ferchen K."/>
            <person name="Greis K.D."/>
            <person name="Jiang X."/>
            <person name="Wei M."/>
            <person name="Qu L."/>
            <person name="Guan J.L."/>
            <person name="He C."/>
            <person name="Yang J."/>
            <person name="Chen J."/>
        </authorList>
    </citation>
    <scope>INTERACTION WITH IGF2BP1; IGF2BP2 AND IGF2BP3</scope>
</reference>
<reference key="59">
    <citation type="journal article" date="2019" name="Sci. Rep.">
        <title>The Interactome analysis of the Respiratory Syncytial Virus protein M2-1 suggests a new role in viral mRNA metabolism post-transcription.</title>
        <authorList>
            <person name="Bouillier C."/>
            <person name="Cosentino G."/>
            <person name="Leger T."/>
            <person name="Rincheval V."/>
            <person name="Richard C.A."/>
            <person name="Desquesnes A."/>
            <person name="Sitterlin D."/>
            <person name="Blouquit-Laye S."/>
            <person name="Eleouet J.F."/>
            <person name="Gault E."/>
            <person name="Rameix-Welti M.A."/>
        </authorList>
    </citation>
    <scope>INTERACTION WITH HRSV M2-1 PROTEIN (MICROBIAL INFECTION)</scope>
    <scope>SUBCELLULAR LOCATION</scope>
</reference>
<reference key="60">
    <citation type="journal article" date="2020" name="Nat. Commun.">
        <title>An oncopeptide regulates m6A recognition by the m6A reader IGF2BP1 and tumorigenesis.</title>
        <authorList>
            <person name="Zhu S."/>
            <person name="Wang J.Z."/>
            <person name="Chen D."/>
            <person name="He Y.T."/>
            <person name="Meng N."/>
            <person name="Chen M."/>
            <person name="Lu R.X."/>
            <person name="Chen X.H."/>
            <person name="Zhang X.L."/>
            <person name="Yan G.R."/>
        </authorList>
    </citation>
    <scope>FUNCTION</scope>
    <scope>INTERACTION WITH IGF2BP1</scope>
</reference>
<reference key="61">
    <citation type="journal article" date="2021" name="EMBO J.">
        <title>The SARS-unique domain (SUD) of SARS-CoV and SARS-CoV-2 interacts with human Paip1 to enhance viral RNA translation.</title>
        <authorList>
            <person name="Lei J."/>
            <person name="Ma-Lauer Y."/>
            <person name="Han Y."/>
            <person name="Thoms M."/>
            <person name="Buschauer R."/>
            <person name="Jores J."/>
            <person name="Thiel V."/>
            <person name="Beckmann R."/>
            <person name="Deng W."/>
            <person name="Leonhardt H."/>
            <person name="Hilgenfeld R."/>
            <person name="von Brunn A."/>
        </authorList>
    </citation>
    <scope>INTERACTION WITH PAIP1</scope>
</reference>
<reference key="62">
    <citation type="journal article" date="1999" name="Cell">
        <title>Recognition of polyadenylate RNA by the poly(A)-binding protein.</title>
        <authorList>
            <person name="Deo R.C."/>
            <person name="Bonanno J.B."/>
            <person name="Sonenberg N."/>
            <person name="Burley S.K."/>
        </authorList>
    </citation>
    <scope>X-RAY CRYSTALLOGRAPHY (2.6 ANGSTROMS) OF 1-190</scope>
</reference>
<reference key="63">
    <citation type="journal article" date="2001" name="Proc. Natl. Acad. Sci. U.S.A.">
        <title>Structure and function of the C-terminal PABC domain of human poly(A)-binding protein.</title>
        <authorList>
            <person name="Kozlov G."/>
            <person name="Trempe J.F."/>
            <person name="Khaleghpour K."/>
            <person name="Kahvejian A."/>
            <person name="Ekiel I."/>
            <person name="Gehring K."/>
        </authorList>
    </citation>
    <scope>STRUCTURE BY NMR OF 498-636</scope>
    <scope>INTERACTION WITH GSPT1; PAIP1 AND PAIP2</scope>
    <scope>DOMAIN</scope>
</reference>
<reference key="64">
    <citation type="submission" date="2009-05" db="PDB data bank">
        <title>Eukaryotic translation termination factor Gspt/ERF3 recognizes Pabp with chemical exchange using two overlapping motifs.</title>
        <authorList>
            <person name="Osawa M."/>
            <person name="Nakanishi T."/>
            <person name="Hosoda N."/>
            <person name="Uchida S."/>
            <person name="Hoshino T."/>
            <person name="Katada I."/>
            <person name="Shimada I."/>
        </authorList>
    </citation>
    <scope>STRUCTURE BY NMR OF 541-623 IN COMPLEX WITH GSPT1</scope>
</reference>
<reference key="65">
    <citation type="journal article" date="2010" name="J. Mol. Biol.">
        <title>Molecular determinants of PAM2 recognition by the MLLE domain of poly(A)-binding protein.</title>
        <authorList>
            <person name="Kozlov G."/>
            <person name="Menade M."/>
            <person name="Rosenauer A."/>
            <person name="Nguyen L."/>
            <person name="Gehring K."/>
        </authorList>
    </citation>
    <scope>X-RAY CRYSTALLOGRAPHY (1.4 ANGSTROMS) OF 544-626 IN COMPLEX WITH PAIP2</scope>
    <scope>DOMAIN</scope>
</reference>
<reference key="66">
    <citation type="submission" date="2010-12" db="PDB data bank">
        <title>LARP4B binds to the PABC1 MLLE domain via a variant PAM2 motif.</title>
        <authorList>
            <person name="Grimm C."/>
            <person name="Pelz J.P."/>
        </authorList>
    </citation>
    <scope>X-RAY CRYSTALLOGRAPHY (1.70 ANGSTROMS) OF 543-621 IN COMPLEX WITH LARP4B</scope>
</reference>
<reference key="67">
    <citation type="journal article" date="2011" name="Mol. Cell. Biol.">
        <title>La-related protein 4 binds poly(A), interacts with the poly(A)-binding protein MLLE domain via a variant PAM2w motif, and can promote mRNA stability.</title>
        <authorList>
            <person name="Yang R."/>
            <person name="Gaidamakov S.A."/>
            <person name="Xie J."/>
            <person name="Lee J."/>
            <person name="Martino L."/>
            <person name="Kozlov G."/>
            <person name="Crawford A.K."/>
            <person name="Russo A.N."/>
            <person name="Conte M.R."/>
            <person name="Gehring K."/>
            <person name="Maraia R.J."/>
        </authorList>
    </citation>
    <scope>X-RAY CRYSTALLOGRAPHY (1.80 ANGSTROMS) OF 544-626 IN COMPLEX WITH LARP4</scope>
</reference>
<feature type="chain" id="PRO_0000081698" description="Polyadenylate-binding protein 1">
    <location>
        <begin position="1"/>
        <end position="636"/>
    </location>
</feature>
<feature type="domain" description="RRM 1" evidence="2">
    <location>
        <begin position="11"/>
        <end position="89"/>
    </location>
</feature>
<feature type="domain" description="RRM 2" evidence="2">
    <location>
        <begin position="99"/>
        <end position="175"/>
    </location>
</feature>
<feature type="domain" description="RRM 3" evidence="2">
    <location>
        <begin position="191"/>
        <end position="268"/>
    </location>
</feature>
<feature type="domain" description="RRM 4" evidence="2">
    <location>
        <begin position="294"/>
        <end position="370"/>
    </location>
</feature>
<feature type="domain" description="PABC" evidence="3">
    <location>
        <begin position="542"/>
        <end position="619"/>
    </location>
</feature>
<feature type="region of interest" description="CSDE1-binding">
    <location>
        <begin position="166"/>
        <end position="289"/>
    </location>
</feature>
<feature type="region of interest" description="(Microbial infection) Binding to HRSV M2-1 protein" evidence="44">
    <location>
        <begin position="541"/>
        <end position="636"/>
    </location>
</feature>
<feature type="modified residue" description="N-acetylmethionine" evidence="59">
    <location>
        <position position="1"/>
    </location>
</feature>
<feature type="modified residue" description="N6-methyllysine" evidence="52">
    <location>
        <position position="299"/>
    </location>
</feature>
<feature type="modified residue" description="Phosphoserine" evidence="58 61 62">
    <location>
        <position position="315"/>
    </location>
</feature>
<feature type="modified residue" description="Phosphothreonine" evidence="62">
    <location>
        <position position="319"/>
    </location>
</feature>
<feature type="modified residue" description="Omega-N-methylarginine" evidence="63">
    <location>
        <position position="385"/>
    </location>
</feature>
<feature type="modified residue" description="Omega-N-methylarginine" evidence="63">
    <location>
        <position position="419"/>
    </location>
</feature>
<feature type="modified residue" description="Omega-N-methylarginine" evidence="63">
    <location>
        <position position="432"/>
    </location>
</feature>
<feature type="modified residue" description="Omega-N-methylarginine" evidence="63">
    <location>
        <position position="436"/>
    </location>
</feature>
<feature type="modified residue" description="Omega-N-methylated arginine; by CARM1; partial" evidence="56">
    <location>
        <position position="455"/>
    </location>
</feature>
<feature type="modified residue" description="Omega-N-methylated arginine; by CARM1; partial" evidence="56">
    <location>
        <position position="460"/>
    </location>
</feature>
<feature type="modified residue" description="Omega-N-methylarginine" evidence="1">
    <location>
        <position position="475"/>
    </location>
</feature>
<feature type="modified residue" description="Omega-N-methylarginine" evidence="63">
    <location>
        <position position="481"/>
    </location>
</feature>
<feature type="modified residue" description="Asymmetric dimethylarginine; alternate" evidence="63">
    <location>
        <position position="493"/>
    </location>
</feature>
<feature type="modified residue" description="Dimethylated arginine; alternate" evidence="50 52">
    <location>
        <position position="493"/>
    </location>
</feature>
<feature type="modified residue" description="Omega-N-methylarginine; alternate" evidence="50 52 63">
    <location>
        <position position="493"/>
    </location>
</feature>
<feature type="modified residue" description="Omega-N-methylarginine" evidence="63">
    <location>
        <position position="506"/>
    </location>
</feature>
<feature type="modified residue" description="N6-acetyllysine" evidence="60">
    <location>
        <position position="512"/>
    </location>
</feature>
<feature type="modified residue" description="Omega-N-methylarginine" evidence="63">
    <location>
        <position position="518"/>
    </location>
</feature>
<feature type="splice variant" id="VSP_009846" description="In isoform 2." evidence="54">
    <location>
        <begin position="447"/>
        <end position="535"/>
    </location>
</feature>
<feature type="mutagenesis site" description="Greatly reduces methylation by CARM1 (in vitro); when associated with A-460." evidence="8">
    <original>R</original>
    <variation>A</variation>
    <location>
        <position position="455"/>
    </location>
</feature>
<feature type="mutagenesis site" description="Greatly reduces methylation by CARM1 (in vitro); when associated with A-455." evidence="8">
    <original>R</original>
    <variation>A</variation>
    <location>
        <position position="460"/>
    </location>
</feature>
<feature type="sequence conflict" description="In Ref. 1; CAA68428." evidence="55" ref="1">
    <location>
        <begin position="211"/>
        <end position="213"/>
    </location>
</feature>
<feature type="sequence conflict" description="In Ref. 5; CAA88401." evidence="55" ref="5">
    <original>M</original>
    <variation>I</variation>
    <location>
        <position position="410"/>
    </location>
</feature>
<feature type="sequence conflict" description="In Ref. 1; CAA68428." evidence="55" ref="1">
    <original>I</original>
    <variation>V</variation>
    <location>
        <position position="428"/>
    </location>
</feature>
<feature type="strand" evidence="68">
    <location>
        <begin position="12"/>
        <end position="17"/>
    </location>
</feature>
<feature type="helix" evidence="68">
    <location>
        <begin position="24"/>
        <end position="31"/>
    </location>
</feature>
<feature type="helix" evidence="68">
    <location>
        <begin position="32"/>
        <end position="34"/>
    </location>
</feature>
<feature type="strand" evidence="68">
    <location>
        <begin position="37"/>
        <end position="44"/>
    </location>
</feature>
<feature type="turn" evidence="68">
    <location>
        <begin position="46"/>
        <end position="48"/>
    </location>
</feature>
<feature type="strand" evidence="68">
    <location>
        <begin position="51"/>
        <end position="61"/>
    </location>
</feature>
<feature type="helix" evidence="68">
    <location>
        <begin position="62"/>
        <end position="72"/>
    </location>
</feature>
<feature type="strand" evidence="68">
    <location>
        <begin position="83"/>
        <end position="86"/>
    </location>
</feature>
<feature type="helix" evidence="68">
    <location>
        <begin position="92"/>
        <end position="96"/>
    </location>
</feature>
<feature type="strand" evidence="69">
    <location>
        <begin position="100"/>
        <end position="105"/>
    </location>
</feature>
<feature type="helix" evidence="69">
    <location>
        <begin position="112"/>
        <end position="119"/>
    </location>
</feature>
<feature type="helix" evidence="69">
    <location>
        <begin position="120"/>
        <end position="122"/>
    </location>
</feature>
<feature type="strand" evidence="69">
    <location>
        <begin position="125"/>
        <end position="133"/>
    </location>
</feature>
<feature type="strand" evidence="69">
    <location>
        <begin position="136"/>
        <end position="146"/>
    </location>
</feature>
<feature type="helix" evidence="69">
    <location>
        <begin position="148"/>
        <end position="158"/>
    </location>
</feature>
<feature type="strand" evidence="66">
    <location>
        <begin position="161"/>
        <end position="163"/>
    </location>
</feature>
<feature type="strand" evidence="69">
    <location>
        <begin position="169"/>
        <end position="174"/>
    </location>
</feature>
<feature type="helix" evidence="68">
    <location>
        <begin position="176"/>
        <end position="183"/>
    </location>
</feature>
<feature type="helix" evidence="67">
    <location>
        <begin position="547"/>
        <end position="551"/>
    </location>
</feature>
<feature type="helix" evidence="67">
    <location>
        <begin position="555"/>
        <end position="557"/>
    </location>
</feature>
<feature type="helix" evidence="67">
    <location>
        <begin position="558"/>
        <end position="573"/>
    </location>
</feature>
<feature type="turn" evidence="67">
    <location>
        <begin position="575"/>
        <end position="577"/>
    </location>
</feature>
<feature type="helix" evidence="67">
    <location>
        <begin position="578"/>
        <end position="585"/>
    </location>
</feature>
<feature type="helix" evidence="67">
    <location>
        <begin position="590"/>
        <end position="598"/>
    </location>
</feature>
<feature type="helix" evidence="67">
    <location>
        <begin position="600"/>
        <end position="619"/>
    </location>
</feature>
<feature type="turn" evidence="65">
    <location>
        <begin position="623"/>
        <end position="625"/>
    </location>
</feature>
<feature type="strand" evidence="64">
    <location>
        <begin position="628"/>
        <end position="630"/>
    </location>
</feature>
<evidence type="ECO:0000250" key="1">
    <source>
        <dbReference type="UniProtKB" id="P29341"/>
    </source>
</evidence>
<evidence type="ECO:0000255" key="2">
    <source>
        <dbReference type="PROSITE-ProRule" id="PRU00176"/>
    </source>
</evidence>
<evidence type="ECO:0000255" key="3">
    <source>
        <dbReference type="PROSITE-ProRule" id="PRU00641"/>
    </source>
</evidence>
<evidence type="ECO:0000269" key="4">
    <source>
    </source>
</evidence>
<evidence type="ECO:0000269" key="5">
    <source>
    </source>
</evidence>
<evidence type="ECO:0000269" key="6">
    <source>
    </source>
</evidence>
<evidence type="ECO:0000269" key="7">
    <source>
    </source>
</evidence>
<evidence type="ECO:0000269" key="8">
    <source>
    </source>
</evidence>
<evidence type="ECO:0000269" key="9">
    <source>
    </source>
</evidence>
<evidence type="ECO:0000269" key="10">
    <source>
    </source>
</evidence>
<evidence type="ECO:0000269" key="11">
    <source>
    </source>
</evidence>
<evidence type="ECO:0000269" key="12">
    <source>
    </source>
</evidence>
<evidence type="ECO:0000269" key="13">
    <source>
    </source>
</evidence>
<evidence type="ECO:0000269" key="14">
    <source>
    </source>
</evidence>
<evidence type="ECO:0000269" key="15">
    <source>
    </source>
</evidence>
<evidence type="ECO:0000269" key="16">
    <source>
    </source>
</evidence>
<evidence type="ECO:0000269" key="17">
    <source>
    </source>
</evidence>
<evidence type="ECO:0000269" key="18">
    <source>
    </source>
</evidence>
<evidence type="ECO:0000269" key="19">
    <source>
    </source>
</evidence>
<evidence type="ECO:0000269" key="20">
    <source>
    </source>
</evidence>
<evidence type="ECO:0000269" key="21">
    <source>
    </source>
</evidence>
<evidence type="ECO:0000269" key="22">
    <source>
    </source>
</evidence>
<evidence type="ECO:0000269" key="23">
    <source>
    </source>
</evidence>
<evidence type="ECO:0000269" key="24">
    <source>
    </source>
</evidence>
<evidence type="ECO:0000269" key="25">
    <source>
    </source>
</evidence>
<evidence type="ECO:0000269" key="26">
    <source>
    </source>
</evidence>
<evidence type="ECO:0000269" key="27">
    <source>
    </source>
</evidence>
<evidence type="ECO:0000269" key="28">
    <source>
    </source>
</evidence>
<evidence type="ECO:0000269" key="29">
    <source>
    </source>
</evidence>
<evidence type="ECO:0000269" key="30">
    <source>
    </source>
</evidence>
<evidence type="ECO:0000269" key="31">
    <source>
    </source>
</evidence>
<evidence type="ECO:0000269" key="32">
    <source>
    </source>
</evidence>
<evidence type="ECO:0000269" key="33">
    <source>
    </source>
</evidence>
<evidence type="ECO:0000269" key="34">
    <source>
    </source>
</evidence>
<evidence type="ECO:0000269" key="35">
    <source>
    </source>
</evidence>
<evidence type="ECO:0000269" key="36">
    <source>
    </source>
</evidence>
<evidence type="ECO:0000269" key="37">
    <source>
    </source>
</evidence>
<evidence type="ECO:0000269" key="38">
    <source>
    </source>
</evidence>
<evidence type="ECO:0000269" key="39">
    <source>
    </source>
</evidence>
<evidence type="ECO:0000269" key="40">
    <source>
    </source>
</evidence>
<evidence type="ECO:0000269" key="41">
    <source>
    </source>
</evidence>
<evidence type="ECO:0000269" key="42">
    <source>
    </source>
</evidence>
<evidence type="ECO:0000269" key="43">
    <source>
    </source>
</evidence>
<evidence type="ECO:0000269" key="44">
    <source>
    </source>
</evidence>
<evidence type="ECO:0000269" key="45">
    <source>
    </source>
</evidence>
<evidence type="ECO:0000269" key="46">
    <source>
    </source>
</evidence>
<evidence type="ECO:0000269" key="47">
    <source>
    </source>
</evidence>
<evidence type="ECO:0000269" key="48">
    <source>
    </source>
</evidence>
<evidence type="ECO:0000269" key="49">
    <source>
    </source>
</evidence>
<evidence type="ECO:0000269" key="50">
    <source ref="6"/>
</evidence>
<evidence type="ECO:0000269" key="51">
    <source ref="64"/>
</evidence>
<evidence type="ECO:0000269" key="52">
    <source ref="7"/>
</evidence>
<evidence type="ECO:0000303" key="53">
    <source>
    </source>
</evidence>
<evidence type="ECO:0000303" key="54">
    <source ref="5"/>
</evidence>
<evidence type="ECO:0000305" key="55"/>
<evidence type="ECO:0000305" key="56">
    <source>
    </source>
</evidence>
<evidence type="ECO:0000312" key="57">
    <source>
        <dbReference type="HGNC" id="HGNC:8554"/>
    </source>
</evidence>
<evidence type="ECO:0007744" key="58">
    <source>
    </source>
</evidence>
<evidence type="ECO:0007744" key="59">
    <source>
    </source>
</evidence>
<evidence type="ECO:0007744" key="60">
    <source>
    </source>
</evidence>
<evidence type="ECO:0007744" key="61">
    <source>
    </source>
</evidence>
<evidence type="ECO:0007744" key="62">
    <source>
    </source>
</evidence>
<evidence type="ECO:0007744" key="63">
    <source>
    </source>
</evidence>
<evidence type="ECO:0007829" key="64">
    <source>
        <dbReference type="PDB" id="1G9L"/>
    </source>
</evidence>
<evidence type="ECO:0007829" key="65">
    <source>
        <dbReference type="PDB" id="1JGN"/>
    </source>
</evidence>
<evidence type="ECO:0007829" key="66">
    <source>
        <dbReference type="PDB" id="2K8G"/>
    </source>
</evidence>
<evidence type="ECO:0007829" key="67">
    <source>
        <dbReference type="PDB" id="3KUJ"/>
    </source>
</evidence>
<evidence type="ECO:0007829" key="68">
    <source>
        <dbReference type="PDB" id="4F02"/>
    </source>
</evidence>
<evidence type="ECO:0007829" key="69">
    <source>
        <dbReference type="PDB" id="4F25"/>
    </source>
</evidence>
<accession>P11940</accession>
<accession>Q15097</accession>
<accession>Q93004</accession>
<gene>
    <name evidence="57" type="primary">PABPC1</name>
    <name type="synonym">PAB1</name>
    <name evidence="53" type="synonym">PABP</name>
    <name type="synonym">PABP1</name>
    <name type="synonym">PABPC2</name>
</gene>
<keyword id="KW-0002">3D-structure</keyword>
<keyword id="KW-0007">Acetylation</keyword>
<keyword id="KW-0025">Alternative splicing</keyword>
<keyword id="KW-0966">Cell projection</keyword>
<keyword id="KW-0963">Cytoplasm</keyword>
<keyword id="KW-0903">Direct protein sequencing</keyword>
<keyword id="KW-0945">Host-virus interaction</keyword>
<keyword id="KW-0488">Methylation</keyword>
<keyword id="KW-0507">mRNA processing</keyword>
<keyword id="KW-0508">mRNA splicing</keyword>
<keyword id="KW-0866">Nonsense-mediated mRNA decay</keyword>
<keyword id="KW-0539">Nucleus</keyword>
<keyword id="KW-0597">Phosphoprotein</keyword>
<keyword id="KW-1267">Proteomics identification</keyword>
<keyword id="KW-1185">Reference proteome</keyword>
<keyword id="KW-0677">Repeat</keyword>
<keyword id="KW-0694">RNA-binding</keyword>
<keyword id="KW-0747">Spliceosome</keyword>